<sequence>MVKEQFRETDVAKKISHICFGMKSPEEMRQQAHIQVVSKNLYSQDNQHAPLLYGVLDHRMGTSEKDRPCETCGKNLADCLGHYGYIDLELPCFHVGYFRAVIGILQMICKTCCHIMLSQEEKKQFLDYLKRPGLTYLQKRGLKKKISDKCRKKNICHHCGAFNGTVKKCGLLKIIHEKYKTNKKVVDPIVSNFLQSFETAIEHNKEVEPLLGRAQENLNPLVVLNLFKRIPAEDVPLLLMNPEAGKPSDLILTRLLVPPLCIRPSVVSDLKSGTNEDDLTMKLTEIIFLNDVIKKHRISGAKTQMIMEDWDFLQLQCALYINSELSGIPLNMAPKKWTRGFVQRLKGKQGRFRGNLSGKRVDFSGRTVISPDPNLRIDEVAVPVHVAKILTFPEKVNKANINFLRKLVQNGPEVHPGANFIQQRHTQMKRFLKYGNREKMAQELKYGDIVERHLIDGDVVLFNRQPSLHKLSIMAHLARVKPHRTFRFNECVCTPYNADFDGDEMNLHLPQTEEAKAEALVLMGTKANLVTPRNGEPLIAAIQDFLTGAYLLTLKDTFFDRAKACQIIASILVGKDEKIKVRLPPPTILKPVTLWTGKQIFSVILRPSDDNPVRANLRTKGKQYCGKGEDLCANDSYVTIQNSELMSGSMDKGTLGSGSKNNIFYILLRDWGQNEAADAMSRLARLAPVYLSNRGFSIGIGDVTPGQGLLKAKYELLNAGYKKCDEYIEALNTGKLQQQPGCTAEETLEALILKELSVIRDHAGSACLRELDKSNSPLTMALCGSKGSFINISQMIACVGQQAISGSRVPDGFENRSLPHFEKHSKLPAAKGFVANSFYSGLTPTEFFFHTMAGREGLVDTAVKTAETGYMQRRLVKSLEDLCSQYDLTVRSSTGDIIQFIYGGDGLDPAAMEGKDEPLEFKRVLDNIKAVFPCPSEPALSKNELILTTESIMKKSEFLCCQDSFLQEIKKFIKGVSEKIKKTRDKYGINDNGTTEPRVLYQLDRITPTQVEKFLETCRDKYMRAQMEPGSAVGALCAQSIGEPGTQMTLKTFHFAGVASMNITLGVPRIKEIINASKAISTPIITAQLDKDDDADYARLVKGRIEKTLLGEISEYIEEVFLPDDCFILVKLSLERIRLLRLEVNAETVRYSICTSKLRVKPGDVAVHGEAVVCVTPRENSKSSMYYVLQFLKEDLPKVVVQGIPEVSRAVIHIDEQSGKEKYKLLVEGDNLRAVMATHGVKGTRTTSNNTYEVEKTLGIEAARTTIINEIQYTMVNHGMSIDRRHVMLLSDLMTYKGEVLGITRFGLAKMKESVLMLASFEKTADHLFDAAYFGQKDSVCGVSECIIMGIPMNIGTGLFKLLHKADRDPNPPKRPLIFDTNEFHIPLVT</sequence>
<evidence type="ECO:0000250" key="1"/>
<evidence type="ECO:0000250" key="2">
    <source>
        <dbReference type="UniProtKB" id="G3MZY8"/>
    </source>
</evidence>
<evidence type="ECO:0000250" key="3">
    <source>
        <dbReference type="UniProtKB" id="P04050"/>
    </source>
</evidence>
<evidence type="ECO:0000250" key="4">
    <source>
        <dbReference type="UniProtKB" id="P24928"/>
    </source>
</evidence>
<evidence type="ECO:0000269" key="5">
    <source>
    </source>
</evidence>
<evidence type="ECO:0000269" key="6">
    <source>
    </source>
</evidence>
<evidence type="ECO:0000269" key="7">
    <source>
    </source>
</evidence>
<evidence type="ECO:0000269" key="8">
    <source>
    </source>
</evidence>
<evidence type="ECO:0000269" key="9">
    <source>
    </source>
</evidence>
<evidence type="ECO:0000269" key="10">
    <source>
    </source>
</evidence>
<evidence type="ECO:0000269" key="11">
    <source>
    </source>
</evidence>
<evidence type="ECO:0000269" key="12">
    <source>
    </source>
</evidence>
<evidence type="ECO:0000269" key="13">
    <source>
    </source>
</evidence>
<evidence type="ECO:0000269" key="14">
    <source>
    </source>
</evidence>
<evidence type="ECO:0000269" key="15">
    <source>
    </source>
</evidence>
<evidence type="ECO:0000269" key="16">
    <source>
    </source>
</evidence>
<evidence type="ECO:0000269" key="17">
    <source>
    </source>
</evidence>
<evidence type="ECO:0000269" key="18">
    <source>
    </source>
</evidence>
<evidence type="ECO:0000269" key="19">
    <source>
    </source>
</evidence>
<evidence type="ECO:0000269" key="20">
    <source>
    </source>
</evidence>
<evidence type="ECO:0000269" key="21">
    <source>
    </source>
</evidence>
<evidence type="ECO:0000269" key="22">
    <source>
    </source>
</evidence>
<evidence type="ECO:0000269" key="23">
    <source>
    </source>
</evidence>
<evidence type="ECO:0000269" key="24">
    <source>
    </source>
</evidence>
<evidence type="ECO:0000303" key="25">
    <source>
    </source>
</evidence>
<evidence type="ECO:0000305" key="26"/>
<evidence type="ECO:0000312" key="27">
    <source>
        <dbReference type="HGNC" id="HGNC:30074"/>
    </source>
</evidence>
<evidence type="ECO:0007744" key="28">
    <source>
        <dbReference type="PDB" id="7A6H"/>
    </source>
</evidence>
<evidence type="ECO:0007744" key="29">
    <source>
        <dbReference type="PDB" id="7AE1"/>
    </source>
</evidence>
<evidence type="ECO:0007744" key="30">
    <source>
        <dbReference type="PDB" id="7D58"/>
    </source>
</evidence>
<evidence type="ECO:0007744" key="31">
    <source>
        <dbReference type="PDB" id="7DN3"/>
    </source>
</evidence>
<evidence type="ECO:0007744" key="32">
    <source>
        <dbReference type="PDB" id="7FJJ"/>
    </source>
</evidence>
<evidence type="ECO:0007744" key="33">
    <source>
    </source>
</evidence>
<evidence type="ECO:0007829" key="34">
    <source>
        <dbReference type="PDB" id="7AE1"/>
    </source>
</evidence>
<evidence type="ECO:0007829" key="35">
    <source>
        <dbReference type="PDB" id="7AE3"/>
    </source>
</evidence>
<evidence type="ECO:0007829" key="36">
    <source>
        <dbReference type="PDB" id="7D58"/>
    </source>
</evidence>
<evidence type="ECO:0007829" key="37">
    <source>
        <dbReference type="PDB" id="7D59"/>
    </source>
</evidence>
<evidence type="ECO:0007829" key="38">
    <source>
        <dbReference type="PDB" id="7DU2"/>
    </source>
</evidence>
<keyword id="KW-0002">3D-structure</keyword>
<keyword id="KW-0007">Acetylation</keyword>
<keyword id="KW-0051">Antiviral defense</keyword>
<keyword id="KW-0963">Cytoplasm</keyword>
<keyword id="KW-0225">Disease variant</keyword>
<keyword id="KW-0240">DNA-directed RNA polymerase</keyword>
<keyword id="KW-0391">Immunity</keyword>
<keyword id="KW-0399">Innate immunity</keyword>
<keyword id="KW-1026">Leukodystrophy</keyword>
<keyword id="KW-0460">Magnesium</keyword>
<keyword id="KW-0479">Metal-binding</keyword>
<keyword id="KW-0548">Nucleotidyltransferase</keyword>
<keyword id="KW-0539">Nucleus</keyword>
<keyword id="KW-1267">Proteomics identification</keyword>
<keyword id="KW-1185">Reference proteome</keyword>
<keyword id="KW-0804">Transcription</keyword>
<keyword id="KW-0808">Transferase</keyword>
<keyword id="KW-0862">Zinc</keyword>
<organism>
    <name type="scientific">Homo sapiens</name>
    <name type="common">Human</name>
    <dbReference type="NCBI Taxonomy" id="9606"/>
    <lineage>
        <taxon>Eukaryota</taxon>
        <taxon>Metazoa</taxon>
        <taxon>Chordata</taxon>
        <taxon>Craniata</taxon>
        <taxon>Vertebrata</taxon>
        <taxon>Euteleostomi</taxon>
        <taxon>Mammalia</taxon>
        <taxon>Eutheria</taxon>
        <taxon>Euarchontoglires</taxon>
        <taxon>Primates</taxon>
        <taxon>Haplorrhini</taxon>
        <taxon>Catarrhini</taxon>
        <taxon>Hominidae</taxon>
        <taxon>Homo</taxon>
    </lineage>
</organism>
<accession>O14802</accession>
<accession>Q8IW34</accession>
<accession>Q8TCW5</accession>
<proteinExistence type="evidence at protein level"/>
<dbReference type="EC" id="2.7.7.6" evidence="7 8 18 19 22 24"/>
<dbReference type="EMBL" id="AF021351">
    <property type="protein sequence ID" value="AAB86536.1"/>
    <property type="molecule type" value="mRNA"/>
</dbReference>
<dbReference type="EMBL" id="AL512628">
    <property type="status" value="NOT_ANNOTATED_CDS"/>
    <property type="molecule type" value="Genomic_DNA"/>
</dbReference>
<dbReference type="EMBL" id="CH471083">
    <property type="protein sequence ID" value="EAW54617.1"/>
    <property type="molecule type" value="Genomic_DNA"/>
</dbReference>
<dbReference type="EMBL" id="BC041089">
    <property type="protein sequence ID" value="AAH41089.1"/>
    <property type="molecule type" value="mRNA"/>
</dbReference>
<dbReference type="EMBL" id="AY091459">
    <property type="protein sequence ID" value="AAM12029.1"/>
    <property type="molecule type" value="mRNA"/>
</dbReference>
<dbReference type="CCDS" id="CCDS7354.1"/>
<dbReference type="RefSeq" id="NP_008986.2">
    <property type="nucleotide sequence ID" value="NM_007055.3"/>
</dbReference>
<dbReference type="PDB" id="7A6H">
    <property type="method" value="EM"/>
    <property type="resolution" value="3.30 A"/>
    <property type="chains" value="A=1-1390"/>
</dbReference>
<dbReference type="PDB" id="7AE1">
    <property type="method" value="EM"/>
    <property type="resolution" value="2.80 A"/>
    <property type="chains" value="A=1-1390"/>
</dbReference>
<dbReference type="PDB" id="7AE3">
    <property type="method" value="EM"/>
    <property type="resolution" value="3.10 A"/>
    <property type="chains" value="A=1-1390"/>
</dbReference>
<dbReference type="PDB" id="7AEA">
    <property type="method" value="EM"/>
    <property type="resolution" value="3.40 A"/>
    <property type="chains" value="A=1-1390"/>
</dbReference>
<dbReference type="PDB" id="7AST">
    <property type="method" value="EM"/>
    <property type="resolution" value="4.00 A"/>
    <property type="chains" value="N=1-1390"/>
</dbReference>
<dbReference type="PDB" id="7D58">
    <property type="method" value="EM"/>
    <property type="resolution" value="2.90 A"/>
    <property type="chains" value="A=1-1390"/>
</dbReference>
<dbReference type="PDB" id="7D59">
    <property type="method" value="EM"/>
    <property type="resolution" value="3.10 A"/>
    <property type="chains" value="A=1-1390"/>
</dbReference>
<dbReference type="PDB" id="7DN3">
    <property type="method" value="EM"/>
    <property type="resolution" value="3.50 A"/>
    <property type="chains" value="A=1-1390"/>
</dbReference>
<dbReference type="PDB" id="7DU2">
    <property type="method" value="EM"/>
    <property type="resolution" value="3.35 A"/>
    <property type="chains" value="A=1-1390"/>
</dbReference>
<dbReference type="PDB" id="7FJI">
    <property type="method" value="EM"/>
    <property type="resolution" value="3.60 A"/>
    <property type="chains" value="A=1-1390"/>
</dbReference>
<dbReference type="PDB" id="7FJJ">
    <property type="method" value="EM"/>
    <property type="resolution" value="3.60 A"/>
    <property type="chains" value="A=1-1390"/>
</dbReference>
<dbReference type="PDB" id="8ITY">
    <property type="method" value="EM"/>
    <property type="resolution" value="3.90 A"/>
    <property type="chains" value="A=1-1390"/>
</dbReference>
<dbReference type="PDB" id="8IUE">
    <property type="method" value="EM"/>
    <property type="resolution" value="4.10 A"/>
    <property type="chains" value="A=1-1390"/>
</dbReference>
<dbReference type="PDB" id="8IUH">
    <property type="method" value="EM"/>
    <property type="resolution" value="3.40 A"/>
    <property type="chains" value="A=1-1390"/>
</dbReference>
<dbReference type="PDB" id="9FSO">
    <property type="method" value="EM"/>
    <property type="resolution" value="3.28 A"/>
    <property type="chains" value="A=1-1390"/>
</dbReference>
<dbReference type="PDB" id="9FSP">
    <property type="method" value="EM"/>
    <property type="resolution" value="3.39 A"/>
    <property type="chains" value="A=1-1390"/>
</dbReference>
<dbReference type="PDB" id="9FSQ">
    <property type="method" value="EM"/>
    <property type="resolution" value="3.51 A"/>
    <property type="chains" value="A=1-1390"/>
</dbReference>
<dbReference type="PDB" id="9FSR">
    <property type="method" value="EM"/>
    <property type="resolution" value="3.76 A"/>
    <property type="chains" value="A=1-1390"/>
</dbReference>
<dbReference type="PDB" id="9FSS">
    <property type="method" value="EM"/>
    <property type="resolution" value="4.14 A"/>
    <property type="chains" value="A=1-1390"/>
</dbReference>
<dbReference type="PDBsum" id="7A6H"/>
<dbReference type="PDBsum" id="7AE1"/>
<dbReference type="PDBsum" id="7AE3"/>
<dbReference type="PDBsum" id="7AEA"/>
<dbReference type="PDBsum" id="7AST"/>
<dbReference type="PDBsum" id="7D58"/>
<dbReference type="PDBsum" id="7D59"/>
<dbReference type="PDBsum" id="7DN3"/>
<dbReference type="PDBsum" id="7DU2"/>
<dbReference type="PDBsum" id="7FJI"/>
<dbReference type="PDBsum" id="7FJJ"/>
<dbReference type="PDBsum" id="8ITY"/>
<dbReference type="PDBsum" id="8IUE"/>
<dbReference type="PDBsum" id="8IUH"/>
<dbReference type="PDBsum" id="9FSO"/>
<dbReference type="PDBsum" id="9FSP"/>
<dbReference type="PDBsum" id="9FSQ"/>
<dbReference type="PDBsum" id="9FSR"/>
<dbReference type="PDBsum" id="9FSS"/>
<dbReference type="EMDB" id="EMD-11673"/>
<dbReference type="EMDB" id="EMD-11736"/>
<dbReference type="EMDB" id="EMD-11738"/>
<dbReference type="EMDB" id="EMD-11742"/>
<dbReference type="EMDB" id="EMD-11904"/>
<dbReference type="EMDB" id="EMD-30577"/>
<dbReference type="EMDB" id="EMD-30578"/>
<dbReference type="EMDB" id="EMD-30779"/>
<dbReference type="EMDB" id="EMD-30865"/>
<dbReference type="EMDB" id="EMD-31621"/>
<dbReference type="EMDB" id="EMD-31622"/>
<dbReference type="EMDB" id="EMD-35712"/>
<dbReference type="EMDB" id="EMD-35719"/>
<dbReference type="EMDB" id="EMD-35722"/>
<dbReference type="EMDB" id="EMD-50730"/>
<dbReference type="EMDB" id="EMD-50731"/>
<dbReference type="EMDB" id="EMD-50732"/>
<dbReference type="EMDB" id="EMD-50733"/>
<dbReference type="EMDB" id="EMD-50734"/>
<dbReference type="SMR" id="O14802"/>
<dbReference type="BioGRID" id="116301">
    <property type="interactions" value="187"/>
</dbReference>
<dbReference type="ComplexPortal" id="CPX-2393">
    <property type="entry name" value="DNA-directed RNA polymerase III complex, POLR3G variant"/>
</dbReference>
<dbReference type="ComplexPortal" id="CPX-7482">
    <property type="entry name" value="DNA-directed RNA polymerase III complex, POLR3GL variant"/>
</dbReference>
<dbReference type="CORUM" id="O14802"/>
<dbReference type="FunCoup" id="O14802">
    <property type="interactions" value="4132"/>
</dbReference>
<dbReference type="IntAct" id="O14802">
    <property type="interactions" value="83"/>
</dbReference>
<dbReference type="MINT" id="O14802"/>
<dbReference type="STRING" id="9606.ENSP00000361446"/>
<dbReference type="ChEMBL" id="CHEMBL4665582"/>
<dbReference type="GlyGen" id="O14802">
    <property type="glycosylation" value="2 sites, 1 O-linked glycan (1 site)"/>
</dbReference>
<dbReference type="iPTMnet" id="O14802"/>
<dbReference type="MetOSite" id="O14802"/>
<dbReference type="PhosphoSitePlus" id="O14802"/>
<dbReference type="SwissPalm" id="O14802"/>
<dbReference type="BioMuta" id="POLR3A"/>
<dbReference type="jPOST" id="O14802"/>
<dbReference type="MassIVE" id="O14802"/>
<dbReference type="PaxDb" id="9606-ENSP00000361446"/>
<dbReference type="PeptideAtlas" id="O14802"/>
<dbReference type="ProteomicsDB" id="48248"/>
<dbReference type="Pumba" id="O14802"/>
<dbReference type="Antibodypedia" id="29822">
    <property type="antibodies" value="162 antibodies from 29 providers"/>
</dbReference>
<dbReference type="DNASU" id="11128"/>
<dbReference type="Ensembl" id="ENST00000372371.8">
    <property type="protein sequence ID" value="ENSP00000361446.3"/>
    <property type="gene ID" value="ENSG00000148606.15"/>
</dbReference>
<dbReference type="GeneID" id="11128"/>
<dbReference type="KEGG" id="hsa:11128"/>
<dbReference type="MANE-Select" id="ENST00000372371.8">
    <property type="protein sequence ID" value="ENSP00000361446.3"/>
    <property type="RefSeq nucleotide sequence ID" value="NM_007055.4"/>
    <property type="RefSeq protein sequence ID" value="NP_008986.2"/>
</dbReference>
<dbReference type="UCSC" id="uc001jzn.4">
    <property type="organism name" value="human"/>
</dbReference>
<dbReference type="AGR" id="HGNC:30074"/>
<dbReference type="CTD" id="11128"/>
<dbReference type="DisGeNET" id="11128"/>
<dbReference type="GeneCards" id="POLR3A"/>
<dbReference type="GeneReviews" id="POLR3A"/>
<dbReference type="HGNC" id="HGNC:30074">
    <property type="gene designation" value="POLR3A"/>
</dbReference>
<dbReference type="HPA" id="ENSG00000148606">
    <property type="expression patterns" value="Low tissue specificity"/>
</dbReference>
<dbReference type="MalaCards" id="POLR3A"/>
<dbReference type="MIM" id="264090">
    <property type="type" value="phenotype"/>
</dbReference>
<dbReference type="MIM" id="607694">
    <property type="type" value="phenotype"/>
</dbReference>
<dbReference type="MIM" id="614258">
    <property type="type" value="gene"/>
</dbReference>
<dbReference type="neXtProt" id="NX_O14802"/>
<dbReference type="OpenTargets" id="ENSG00000148606"/>
<dbReference type="Orphanet" id="137639">
    <property type="disease" value="Hypomyelinating leukodystrophy-ataxia-hypodontia-hypomyelination syndrome"/>
</dbReference>
<dbReference type="Orphanet" id="447893">
    <property type="disease" value="Hypomyelination-cerebellar atrophy-hypoplasia of the corpus callosum syndrome"/>
</dbReference>
<dbReference type="Orphanet" id="88637">
    <property type="disease" value="Hypomyelination-hypogonadotropic hypogonadism-hypodontia syndrome"/>
</dbReference>
<dbReference type="Orphanet" id="77295">
    <property type="disease" value="Odontoleukodystrophy"/>
</dbReference>
<dbReference type="Orphanet" id="447896">
    <property type="disease" value="Tremor-ataxia-central hypomyelination syndrome"/>
</dbReference>
<dbReference type="Orphanet" id="3455">
    <property type="disease" value="Wiedemann-Rautenstrauch syndrome"/>
</dbReference>
<dbReference type="PharmGKB" id="PA134900426"/>
<dbReference type="VEuPathDB" id="HostDB:ENSG00000148606"/>
<dbReference type="eggNOG" id="KOG0261">
    <property type="taxonomic scope" value="Eukaryota"/>
</dbReference>
<dbReference type="GeneTree" id="ENSGT00930000151028"/>
<dbReference type="HOGENOM" id="CLU_000487_3_0_1"/>
<dbReference type="InParanoid" id="O14802"/>
<dbReference type="OMA" id="AVCPPYN"/>
<dbReference type="OrthoDB" id="270392at2759"/>
<dbReference type="PAN-GO" id="O14802">
    <property type="GO annotations" value="2 GO annotations based on evolutionary models"/>
</dbReference>
<dbReference type="PhylomeDB" id="O14802"/>
<dbReference type="TreeFam" id="TF103054"/>
<dbReference type="PathwayCommons" id="O14802"/>
<dbReference type="Reactome" id="R-HSA-1834949">
    <property type="pathway name" value="Cytosolic sensors of pathogen-associated DNA"/>
</dbReference>
<dbReference type="Reactome" id="R-HSA-73780">
    <property type="pathway name" value="RNA Polymerase III Chain Elongation"/>
</dbReference>
<dbReference type="Reactome" id="R-HSA-73980">
    <property type="pathway name" value="RNA Polymerase III Transcription Termination"/>
</dbReference>
<dbReference type="Reactome" id="R-HSA-749476">
    <property type="pathway name" value="RNA Polymerase III Abortive And Retractive Initiation"/>
</dbReference>
<dbReference type="Reactome" id="R-HSA-76061">
    <property type="pathway name" value="RNA Polymerase III Transcription Initiation From Type 1 Promoter"/>
</dbReference>
<dbReference type="Reactome" id="R-HSA-76066">
    <property type="pathway name" value="RNA Polymerase III Transcription Initiation From Type 2 Promoter"/>
</dbReference>
<dbReference type="Reactome" id="R-HSA-76071">
    <property type="pathway name" value="RNA Polymerase III Transcription Initiation From Type 3 Promoter"/>
</dbReference>
<dbReference type="SignaLink" id="O14802"/>
<dbReference type="SIGNOR" id="O14802"/>
<dbReference type="BioGRID-ORCS" id="11128">
    <property type="hits" value="855 hits in 1176 CRISPR screens"/>
</dbReference>
<dbReference type="CD-CODE" id="91857CE7">
    <property type="entry name" value="Nucleolus"/>
</dbReference>
<dbReference type="ChiTaRS" id="POLR3A">
    <property type="organism name" value="human"/>
</dbReference>
<dbReference type="GenomeRNAi" id="11128"/>
<dbReference type="Pharos" id="O14802">
    <property type="development level" value="Tbio"/>
</dbReference>
<dbReference type="PRO" id="PR:O14802"/>
<dbReference type="Proteomes" id="UP000005640">
    <property type="component" value="Chromosome 10"/>
</dbReference>
<dbReference type="RNAct" id="O14802">
    <property type="molecule type" value="protein"/>
</dbReference>
<dbReference type="Bgee" id="ENSG00000148606">
    <property type="expression patterns" value="Expressed in buccal mucosa cell and 185 other cell types or tissues"/>
</dbReference>
<dbReference type="ExpressionAtlas" id="O14802">
    <property type="expression patterns" value="baseline and differential"/>
</dbReference>
<dbReference type="GO" id="GO:0005737">
    <property type="term" value="C:cytoplasm"/>
    <property type="evidence" value="ECO:0000314"/>
    <property type="project" value="UniProtKB"/>
</dbReference>
<dbReference type="GO" id="GO:0005829">
    <property type="term" value="C:cytosol"/>
    <property type="evidence" value="ECO:0000304"/>
    <property type="project" value="Reactome"/>
</dbReference>
<dbReference type="GO" id="GO:0016020">
    <property type="term" value="C:membrane"/>
    <property type="evidence" value="ECO:0007005"/>
    <property type="project" value="UniProtKB"/>
</dbReference>
<dbReference type="GO" id="GO:0005739">
    <property type="term" value="C:mitochondrion"/>
    <property type="evidence" value="ECO:0007669"/>
    <property type="project" value="GOC"/>
</dbReference>
<dbReference type="GO" id="GO:0005654">
    <property type="term" value="C:nucleoplasm"/>
    <property type="evidence" value="ECO:0000314"/>
    <property type="project" value="HPA"/>
</dbReference>
<dbReference type="GO" id="GO:0005634">
    <property type="term" value="C:nucleus"/>
    <property type="evidence" value="ECO:0000314"/>
    <property type="project" value="UniProtKB"/>
</dbReference>
<dbReference type="GO" id="GO:0005666">
    <property type="term" value="C:RNA polymerase III complex"/>
    <property type="evidence" value="ECO:0000314"/>
    <property type="project" value="UniProtKB"/>
</dbReference>
<dbReference type="GO" id="GO:0003682">
    <property type="term" value="F:chromatin binding"/>
    <property type="evidence" value="ECO:0007669"/>
    <property type="project" value="Ensembl"/>
</dbReference>
<dbReference type="GO" id="GO:0003677">
    <property type="term" value="F:DNA binding"/>
    <property type="evidence" value="ECO:0007669"/>
    <property type="project" value="InterPro"/>
</dbReference>
<dbReference type="GO" id="GO:0003899">
    <property type="term" value="F:DNA-directed RNA polymerase activity"/>
    <property type="evidence" value="ECO:0000314"/>
    <property type="project" value="UniProtKB"/>
</dbReference>
<dbReference type="GO" id="GO:0071667">
    <property type="term" value="F:DNA/RNA hybrid binding"/>
    <property type="evidence" value="ECO:0000314"/>
    <property type="project" value="UniProtKB"/>
</dbReference>
<dbReference type="GO" id="GO:0000287">
    <property type="term" value="F:magnesium ion binding"/>
    <property type="evidence" value="ECO:0000314"/>
    <property type="project" value="UniProtKB"/>
</dbReference>
<dbReference type="GO" id="GO:0008270">
    <property type="term" value="F:zinc ion binding"/>
    <property type="evidence" value="ECO:0000314"/>
    <property type="project" value="UniProtKB"/>
</dbReference>
<dbReference type="GO" id="GO:0051607">
    <property type="term" value="P:defense response to virus"/>
    <property type="evidence" value="ECO:0007669"/>
    <property type="project" value="UniProtKB-KW"/>
</dbReference>
<dbReference type="GO" id="GO:0006351">
    <property type="term" value="P:DNA-templated transcription"/>
    <property type="evidence" value="ECO:0000303"/>
    <property type="project" value="UniProtKB"/>
</dbReference>
<dbReference type="GO" id="GO:0045087">
    <property type="term" value="P:innate immune response"/>
    <property type="evidence" value="ECO:0000315"/>
    <property type="project" value="UniProtKB"/>
</dbReference>
<dbReference type="GO" id="GO:0032728">
    <property type="term" value="P:positive regulation of interferon-beta production"/>
    <property type="evidence" value="ECO:0000315"/>
    <property type="project" value="UniProtKB"/>
</dbReference>
<dbReference type="GO" id="GO:0042797">
    <property type="term" value="P:tRNA transcription by RNA polymerase III"/>
    <property type="evidence" value="ECO:0000314"/>
    <property type="project" value="UniProtKB"/>
</dbReference>
<dbReference type="CDD" id="cd02736">
    <property type="entry name" value="RNAP_III_Rpc1_C"/>
    <property type="match status" value="1"/>
</dbReference>
<dbReference type="CDD" id="cd02583">
    <property type="entry name" value="RNAP_III_RPC1_N"/>
    <property type="match status" value="1"/>
</dbReference>
<dbReference type="FunFam" id="2.40.40.20:FF:000019">
    <property type="entry name" value="DNA-directed RNA polymerase II subunit RPB1"/>
    <property type="match status" value="1"/>
</dbReference>
<dbReference type="FunFam" id="1.10.132.30:FF:000001">
    <property type="entry name" value="DNA-directed RNA polymerase subunit"/>
    <property type="match status" value="1"/>
</dbReference>
<dbReference type="FunFam" id="1.10.150.390:FF:000003">
    <property type="entry name" value="DNA-directed RNA polymerase subunit"/>
    <property type="match status" value="1"/>
</dbReference>
<dbReference type="FunFam" id="1.10.274.100:FF:000003">
    <property type="entry name" value="DNA-directed RNA polymerase subunit"/>
    <property type="match status" value="1"/>
</dbReference>
<dbReference type="FunFam" id="3.30.1490.180:FF:000002">
    <property type="entry name" value="DNA-directed RNA polymerase subunit"/>
    <property type="match status" value="1"/>
</dbReference>
<dbReference type="FunFam" id="4.10.860.120:FF:000004">
    <property type="entry name" value="DNA-directed RNA polymerase subunit"/>
    <property type="match status" value="1"/>
</dbReference>
<dbReference type="Gene3D" id="1.10.132.30">
    <property type="match status" value="1"/>
</dbReference>
<dbReference type="Gene3D" id="1.10.150.390">
    <property type="match status" value="1"/>
</dbReference>
<dbReference type="Gene3D" id="2.40.40.20">
    <property type="match status" value="1"/>
</dbReference>
<dbReference type="Gene3D" id="6.10.250.2940">
    <property type="match status" value="1"/>
</dbReference>
<dbReference type="Gene3D" id="6.20.50.80">
    <property type="match status" value="1"/>
</dbReference>
<dbReference type="Gene3D" id="3.30.1490.180">
    <property type="entry name" value="RNA polymerase ii"/>
    <property type="match status" value="1"/>
</dbReference>
<dbReference type="Gene3D" id="4.10.860.120">
    <property type="entry name" value="RNA polymerase II, clamp domain"/>
    <property type="match status" value="1"/>
</dbReference>
<dbReference type="Gene3D" id="1.10.274.100">
    <property type="entry name" value="RNA polymerase Rpb1, domain 3"/>
    <property type="match status" value="1"/>
</dbReference>
<dbReference type="InterPro" id="IPR000722">
    <property type="entry name" value="RNA_pol_asu"/>
</dbReference>
<dbReference type="InterPro" id="IPR006592">
    <property type="entry name" value="RNA_pol_N"/>
</dbReference>
<dbReference type="InterPro" id="IPR007080">
    <property type="entry name" value="RNA_pol_Rpb1_1"/>
</dbReference>
<dbReference type="InterPro" id="IPR007066">
    <property type="entry name" value="RNA_pol_Rpb1_3"/>
</dbReference>
<dbReference type="InterPro" id="IPR042102">
    <property type="entry name" value="RNA_pol_Rpb1_3_sf"/>
</dbReference>
<dbReference type="InterPro" id="IPR007083">
    <property type="entry name" value="RNA_pol_Rpb1_4"/>
</dbReference>
<dbReference type="InterPro" id="IPR007081">
    <property type="entry name" value="RNA_pol_Rpb1_5"/>
</dbReference>
<dbReference type="InterPro" id="IPR044893">
    <property type="entry name" value="RNA_pol_Rpb1_clamp_domain"/>
</dbReference>
<dbReference type="InterPro" id="IPR035698">
    <property type="entry name" value="RNAP_III_Rpc1_C"/>
</dbReference>
<dbReference type="InterPro" id="IPR035697">
    <property type="entry name" value="RNAP_III_RPC1_N"/>
</dbReference>
<dbReference type="InterPro" id="IPR038120">
    <property type="entry name" value="Rpb1_funnel_sf"/>
</dbReference>
<dbReference type="InterPro" id="IPR015700">
    <property type="entry name" value="RPC1"/>
</dbReference>
<dbReference type="NCBIfam" id="NF006336">
    <property type="entry name" value="PRK08566.1"/>
    <property type="match status" value="1"/>
</dbReference>
<dbReference type="PANTHER" id="PTHR48446">
    <property type="entry name" value="DNA-DIRECTED RNA POLYMERASE SUBUNIT BETA' N-TERMINAL SECTION"/>
    <property type="match status" value="1"/>
</dbReference>
<dbReference type="PANTHER" id="PTHR48446:SF1">
    <property type="entry name" value="DNA-DIRECTED RNA POLYMERASE SUBUNIT BETA' N-TERMINAL SECTION"/>
    <property type="match status" value="1"/>
</dbReference>
<dbReference type="Pfam" id="PF04997">
    <property type="entry name" value="RNA_pol_Rpb1_1"/>
    <property type="match status" value="1"/>
</dbReference>
<dbReference type="Pfam" id="PF00623">
    <property type="entry name" value="RNA_pol_Rpb1_2"/>
    <property type="match status" value="1"/>
</dbReference>
<dbReference type="Pfam" id="PF04983">
    <property type="entry name" value="RNA_pol_Rpb1_3"/>
    <property type="match status" value="1"/>
</dbReference>
<dbReference type="Pfam" id="PF05000">
    <property type="entry name" value="RNA_pol_Rpb1_4"/>
    <property type="match status" value="1"/>
</dbReference>
<dbReference type="Pfam" id="PF04998">
    <property type="entry name" value="RNA_pol_Rpb1_5"/>
    <property type="match status" value="1"/>
</dbReference>
<dbReference type="SMART" id="SM00663">
    <property type="entry name" value="RPOLA_N"/>
    <property type="match status" value="1"/>
</dbReference>
<dbReference type="SUPFAM" id="SSF64484">
    <property type="entry name" value="beta and beta-prime subunits of DNA dependent RNA-polymerase"/>
    <property type="match status" value="1"/>
</dbReference>
<reference key="1">
    <citation type="journal article" date="1997" name="Genome Res.">
        <title>The largest subunit of human RNA polymerase III is closely related to the largest subunit of yeast and trypanosome RNA polymerase III.</title>
        <authorList>
            <person name="Sepehri S."/>
            <person name="Hernandez N."/>
        </authorList>
    </citation>
    <scope>NUCLEOTIDE SEQUENCE [MRNA]</scope>
    <scope>FUNCTION</scope>
    <scope>CATALYTIC ACTIVITY</scope>
</reference>
<reference key="2">
    <citation type="journal article" date="2004" name="Nature">
        <title>The DNA sequence and comparative analysis of human chromosome 10.</title>
        <authorList>
            <person name="Deloukas P."/>
            <person name="Earthrowl M.E."/>
            <person name="Grafham D.V."/>
            <person name="Rubenfield M."/>
            <person name="French L."/>
            <person name="Steward C.A."/>
            <person name="Sims S.K."/>
            <person name="Jones M.C."/>
            <person name="Searle S."/>
            <person name="Scott C."/>
            <person name="Howe K."/>
            <person name="Hunt S.E."/>
            <person name="Andrews T.D."/>
            <person name="Gilbert J.G.R."/>
            <person name="Swarbreck D."/>
            <person name="Ashurst J.L."/>
            <person name="Taylor A."/>
            <person name="Battles J."/>
            <person name="Bird C.P."/>
            <person name="Ainscough R."/>
            <person name="Almeida J.P."/>
            <person name="Ashwell R.I.S."/>
            <person name="Ambrose K.D."/>
            <person name="Babbage A.K."/>
            <person name="Bagguley C.L."/>
            <person name="Bailey J."/>
            <person name="Banerjee R."/>
            <person name="Bates K."/>
            <person name="Beasley H."/>
            <person name="Bray-Allen S."/>
            <person name="Brown A.J."/>
            <person name="Brown J.Y."/>
            <person name="Burford D.C."/>
            <person name="Burrill W."/>
            <person name="Burton J."/>
            <person name="Cahill P."/>
            <person name="Camire D."/>
            <person name="Carter N.P."/>
            <person name="Chapman J.C."/>
            <person name="Clark S.Y."/>
            <person name="Clarke G."/>
            <person name="Clee C.M."/>
            <person name="Clegg S."/>
            <person name="Corby N."/>
            <person name="Coulson A."/>
            <person name="Dhami P."/>
            <person name="Dutta I."/>
            <person name="Dunn M."/>
            <person name="Faulkner L."/>
            <person name="Frankish A."/>
            <person name="Frankland J.A."/>
            <person name="Garner P."/>
            <person name="Garnett J."/>
            <person name="Gribble S."/>
            <person name="Griffiths C."/>
            <person name="Grocock R."/>
            <person name="Gustafson E."/>
            <person name="Hammond S."/>
            <person name="Harley J.L."/>
            <person name="Hart E."/>
            <person name="Heath P.D."/>
            <person name="Ho T.P."/>
            <person name="Hopkins B."/>
            <person name="Horne J."/>
            <person name="Howden P.J."/>
            <person name="Huckle E."/>
            <person name="Hynds C."/>
            <person name="Johnson C."/>
            <person name="Johnson D."/>
            <person name="Kana A."/>
            <person name="Kay M."/>
            <person name="Kimberley A.M."/>
            <person name="Kershaw J.K."/>
            <person name="Kokkinaki M."/>
            <person name="Laird G.K."/>
            <person name="Lawlor S."/>
            <person name="Lee H.M."/>
            <person name="Leongamornlert D.A."/>
            <person name="Laird G."/>
            <person name="Lloyd C."/>
            <person name="Lloyd D.M."/>
            <person name="Loveland J."/>
            <person name="Lovell J."/>
            <person name="McLaren S."/>
            <person name="McLay K.E."/>
            <person name="McMurray A."/>
            <person name="Mashreghi-Mohammadi M."/>
            <person name="Matthews L."/>
            <person name="Milne S."/>
            <person name="Nickerson T."/>
            <person name="Nguyen M."/>
            <person name="Overton-Larty E."/>
            <person name="Palmer S.A."/>
            <person name="Pearce A.V."/>
            <person name="Peck A.I."/>
            <person name="Pelan S."/>
            <person name="Phillimore B."/>
            <person name="Porter K."/>
            <person name="Rice C.M."/>
            <person name="Rogosin A."/>
            <person name="Ross M.T."/>
            <person name="Sarafidou T."/>
            <person name="Sehra H.K."/>
            <person name="Shownkeen R."/>
            <person name="Skuce C.D."/>
            <person name="Smith M."/>
            <person name="Standring L."/>
            <person name="Sycamore N."/>
            <person name="Tester J."/>
            <person name="Thorpe A."/>
            <person name="Torcasso W."/>
            <person name="Tracey A."/>
            <person name="Tromans A."/>
            <person name="Tsolas J."/>
            <person name="Wall M."/>
            <person name="Walsh J."/>
            <person name="Wang H."/>
            <person name="Weinstock K."/>
            <person name="West A.P."/>
            <person name="Willey D.L."/>
            <person name="Whitehead S.L."/>
            <person name="Wilming L."/>
            <person name="Wray P.W."/>
            <person name="Young L."/>
            <person name="Chen Y."/>
            <person name="Lovering R.C."/>
            <person name="Moschonas N.K."/>
            <person name="Siebert R."/>
            <person name="Fechtel K."/>
            <person name="Bentley D."/>
            <person name="Durbin R.M."/>
            <person name="Hubbard T."/>
            <person name="Doucette-Stamm L."/>
            <person name="Beck S."/>
            <person name="Smith D.R."/>
            <person name="Rogers J."/>
        </authorList>
    </citation>
    <scope>NUCLEOTIDE SEQUENCE [LARGE SCALE GENOMIC DNA]</scope>
</reference>
<reference key="3">
    <citation type="submission" date="2005-07" db="EMBL/GenBank/DDBJ databases">
        <authorList>
            <person name="Mural R.J."/>
            <person name="Istrail S."/>
            <person name="Sutton G.G."/>
            <person name="Florea L."/>
            <person name="Halpern A.L."/>
            <person name="Mobarry C.M."/>
            <person name="Lippert R."/>
            <person name="Walenz B."/>
            <person name="Shatkay H."/>
            <person name="Dew I."/>
            <person name="Miller J.R."/>
            <person name="Flanigan M.J."/>
            <person name="Edwards N.J."/>
            <person name="Bolanos R."/>
            <person name="Fasulo D."/>
            <person name="Halldorsson B.V."/>
            <person name="Hannenhalli S."/>
            <person name="Turner R."/>
            <person name="Yooseph S."/>
            <person name="Lu F."/>
            <person name="Nusskern D.R."/>
            <person name="Shue B.C."/>
            <person name="Zheng X.H."/>
            <person name="Zhong F."/>
            <person name="Delcher A.L."/>
            <person name="Huson D.H."/>
            <person name="Kravitz S.A."/>
            <person name="Mouchard L."/>
            <person name="Reinert K."/>
            <person name="Remington K.A."/>
            <person name="Clark A.G."/>
            <person name="Waterman M.S."/>
            <person name="Eichler E.E."/>
            <person name="Adams M.D."/>
            <person name="Hunkapiller M.W."/>
            <person name="Myers E.W."/>
            <person name="Venter J.C."/>
        </authorList>
    </citation>
    <scope>NUCLEOTIDE SEQUENCE [LARGE SCALE GENOMIC DNA]</scope>
</reference>
<reference key="4">
    <citation type="journal article" date="2004" name="Genome Res.">
        <title>The status, quality, and expansion of the NIH full-length cDNA project: the Mammalian Gene Collection (MGC).</title>
        <authorList>
            <consortium name="The MGC Project Team"/>
        </authorList>
    </citation>
    <scope>NUCLEOTIDE SEQUENCE [LARGE SCALE MRNA]</scope>
    <source>
        <tissue>Uterus</tissue>
    </source>
</reference>
<reference key="5">
    <citation type="journal article" date="2002" name="Arthritis Rheum.">
        <title>Identification of an immunodominant epitope on RNA polymerase III recognized by systemic sclerosis sera: application to enzyme-linked immunosorbent assay.</title>
        <authorList>
            <person name="Kuwana M."/>
            <person name="Kimura K."/>
            <person name="Kawakami Y."/>
        </authorList>
    </citation>
    <scope>NUCLEOTIDE SEQUENCE [MRNA] OF 1-374</scope>
</reference>
<reference key="6">
    <citation type="journal article" date="2001" name="Proc. Natl. Acad. Sci. U.S.A.">
        <title>Nuclear particles containing RNA polymerase III complexes associated with the junctional plaque protein plakophilin 2.</title>
        <authorList>
            <person name="Mertens C."/>
            <person name="Hofmann I."/>
            <person name="Wang Z."/>
            <person name="Teichmann M."/>
            <person name="Sepehri Chong S."/>
            <person name="Schnoelzer M."/>
            <person name="Franke W.W."/>
        </authorList>
    </citation>
    <scope>INTERACTION WITH PKP2</scope>
    <scope>SUBCELLULAR LOCATION</scope>
</reference>
<reference key="7">
    <citation type="journal article" date="2002" name="Mol. Cell. Biol.">
        <title>Characterization of human RNA polymerase III identifies orthologues for Saccharomyces cerevisiae RNA polymerase III subunits.</title>
        <authorList>
            <person name="Hu P."/>
            <person name="Wu S."/>
            <person name="Sun Y."/>
            <person name="Yuan C.-C."/>
            <person name="Kobayashi R."/>
            <person name="Myers M.P."/>
            <person name="Hernandez N."/>
        </authorList>
    </citation>
    <scope>IDENTIFICATION IN THE RNA POL III COMPLEX</scope>
    <scope>IDENTIFICATION BY MASS SPECTROMETRY</scope>
</reference>
<reference key="8">
    <citation type="journal article" date="2009" name="Cell">
        <title>RNA polymerase III detects cytosolic DNA and induces type I interferons through the RIG-I pathway.</title>
        <authorList>
            <person name="Chiu Y.-H."/>
            <person name="Macmillan J.B."/>
            <person name="Chen Z.J."/>
        </authorList>
    </citation>
    <scope>FUNCTION</scope>
    <scope>CATALYTIC ACTIVITY</scope>
    <scope>SUBUNIT</scope>
</reference>
<reference key="9">
    <citation type="journal article" date="2009" name="Nat. Immunol.">
        <title>RIG-I-dependent sensing of poly(dA:dT) through the induction of an RNA polymerase III-transcribed RNA intermediate.</title>
        <authorList>
            <person name="Ablasser A."/>
            <person name="Bauernfeind F."/>
            <person name="Hartmann G."/>
            <person name="Latz E."/>
            <person name="Fitzgerald K.A."/>
            <person name="Hornung V."/>
        </authorList>
    </citation>
    <scope>FUNCTION</scope>
    <scope>CATALYTIC ACTIVITY</scope>
</reference>
<reference key="10">
    <citation type="journal article" date="2009" name="Science">
        <title>Lysine acetylation targets protein complexes and co-regulates major cellular functions.</title>
        <authorList>
            <person name="Choudhary C."/>
            <person name="Kumar C."/>
            <person name="Gnad F."/>
            <person name="Nielsen M.L."/>
            <person name="Rehman M."/>
            <person name="Walther T.C."/>
            <person name="Olsen J.V."/>
            <person name="Mann M."/>
        </authorList>
    </citation>
    <scope>ACETYLATION [LARGE SCALE ANALYSIS] AT LYS-445</scope>
    <scope>IDENTIFICATION BY MASS SPECTROMETRY [LARGE SCALE ANALYSIS]</scope>
</reference>
<reference key="11">
    <citation type="journal article" date="2010" name="Genome Res.">
        <title>Defining the RNA polymerase III transcriptome: Genome-wide localization of the RNA polymerase III transcription machinery in human cells.</title>
        <authorList>
            <person name="Canella D."/>
            <person name="Praz V."/>
            <person name="Reina J.H."/>
            <person name="Cousin P."/>
            <person name="Hernandez N."/>
        </authorList>
    </citation>
    <scope>FUNCTION OF POL III</scope>
</reference>
<reference key="12">
    <citation type="journal article" date="2011" name="BMC Syst. Biol.">
        <title>Initial characterization of the human central proteome.</title>
        <authorList>
            <person name="Burkard T.R."/>
            <person name="Planyavsky M."/>
            <person name="Kaupe I."/>
            <person name="Breitwieser F.P."/>
            <person name="Buerckstuemmer T."/>
            <person name="Bennett K.L."/>
            <person name="Superti-Furga G."/>
            <person name="Colinge J."/>
        </authorList>
    </citation>
    <scope>IDENTIFICATION BY MASS SPECTROMETRY [LARGE SCALE ANALYSIS]</scope>
</reference>
<reference key="13">
    <citation type="journal article" date="2022" name="Nat. Commun.">
        <title>A cancer-associated RNA polymerase III identity drives robust transcription and expression of snaR-A non-coding RNA.</title>
        <authorList>
            <person name="Van Bortle K."/>
            <person name="Marciano D.P."/>
            <person name="Liu Q."/>
            <person name="Chou T."/>
            <person name="Lipchik A.M."/>
            <person name="Gollapudi S."/>
            <person name="Geller B.S."/>
            <person name="Monte E."/>
            <person name="Kamakaka R.T."/>
            <person name="Snyder M.P."/>
        </authorList>
    </citation>
    <scope>FUNCTION OF POL III</scope>
    <scope>SUBUNIT</scope>
</reference>
<reference key="14">
    <citation type="journal article" date="2020" name="Nat. Commun.">
        <title>Structure of human RNA polymerase III.</title>
        <authorList>
            <person name="Ramsay E.P."/>
            <person name="Abascal-Palacios G."/>
            <person name="Daiss J.L."/>
            <person name="King H."/>
            <person name="Gouge J."/>
            <person name="Pilsl M."/>
            <person name="Beuron F."/>
            <person name="Morris E."/>
            <person name="Gunkel P."/>
            <person name="Engel C."/>
            <person name="Vannini A."/>
        </authorList>
    </citation>
    <scope>STRUCTURE BY ELECTRON MICROSCOPY (4.00 ANGSTROMS)</scope>
    <scope>FUNCTION</scope>
    <scope>CATALYTIC ACTIVITY</scope>
    <scope>SUBUNIT</scope>
    <scope>SUBCELLULAR LOCATION</scope>
</reference>
<reference key="15">
    <citation type="journal article" date="2021" name="Cell Res.">
        <title>Structure of human RNA polymerase III elongation complex.</title>
        <authorList>
            <person name="Li L."/>
            <person name="Yu Z."/>
            <person name="Zhao D."/>
            <person name="Ren Y."/>
            <person name="Hou H."/>
            <person name="Xu Y."/>
        </authorList>
    </citation>
    <scope>STRUCTURE BY ELECTRON MICROSCOPY (3.35 ANGSTROMS) IN COMPLEX WITH DNA-RNA HYBRID; MG(2+) AND ZN(2+)</scope>
    <scope>FUNCTION</scope>
    <scope>SUBUNIT</scope>
</reference>
<reference key="16">
    <citation type="journal article" date="2021" name="Nat. Commun.">
        <title>Structural insights into RNA polymerase III-mediated transcription termination through trapping poly-deoxythymidine.</title>
        <authorList>
            <person name="Hou H."/>
            <person name="Li Y."/>
            <person name="Wang M."/>
            <person name="Liu A."/>
            <person name="Yu Z."/>
            <person name="Chen K."/>
            <person name="Zhao D."/>
            <person name="Xu Y."/>
        </authorList>
    </citation>
    <scope>STRUCTURE BY ELECTRON MICROSCOPY (3.60 ANGSTROMS) IN COMPLEX WITH DNA-RNA HYBRID; MG(2+) AND ZN(2+)</scope>
    <scope>FUNCTION</scope>
    <scope>CATALYTIC ACTIVITY</scope>
    <scope>COFACTOR</scope>
    <scope>SUBUNIT</scope>
</reference>
<reference key="17">
    <citation type="journal article" date="2021" name="Nat. Struct. Mol. Biol.">
        <title>Cryo-EM structures of human RNA polymerase III in its unbound and transcribing states.</title>
        <authorList>
            <person name="Girbig M."/>
            <person name="Misiaszek A.D."/>
            <person name="Vorlander M.K."/>
            <person name="Lafita A."/>
            <person name="Grotsch H."/>
            <person name="Baudin F."/>
            <person name="Bateman A."/>
            <person name="Muller C.W."/>
        </authorList>
    </citation>
    <scope>STRUCTURE BY ELECTRON MICROSCOPY (2.80 ANGSTROMS) IN COMPLEX WITH DNA-RNA HYBRID; MG(2+) AND ZN(2+)</scope>
    <scope>FUNCTION</scope>
    <scope>CATALYTIC ACTIVITY</scope>
    <scope>COFACTOR</scope>
    <scope>SUBUNIT</scope>
</reference>
<reference key="18">
    <citation type="journal article" date="2021" name="Nat. Struct. Mol. Biol.">
        <title>Structural insights into transcriptional regulation of human RNA polymerase III.</title>
        <authorList>
            <person name="Wang Q."/>
            <person name="Li S."/>
            <person name="Wan F."/>
            <person name="Xu Y."/>
            <person name="Wu Z."/>
            <person name="Cao M."/>
            <person name="Lan P."/>
            <person name="Lei M."/>
            <person name="Wu J."/>
        </authorList>
    </citation>
    <scope>STRUCTURE BY ELECTRON MICROSCOPY (2.90 ANGSTROMS) IN COMPLEX WITH DNA-RNA HYBRID; MG(2+) AND ZN(2+)</scope>
    <scope>FUNCTION</scope>
    <scope>SUBUNIT</scope>
</reference>
<reference key="19">
    <citation type="journal article" date="2011" name="Am. J. Hum. Genet.">
        <title>Mutations of POLR3A encoding a catalytic subunit of RNA polymerase Pol III cause a recessive hypomyelinating leukodystrophy.</title>
        <authorList>
            <person name="Bernard G."/>
            <person name="Chouery E."/>
            <person name="Putorti M.L."/>
            <person name="Tetreault M."/>
            <person name="Takanohashi A."/>
            <person name="Carosso G."/>
            <person name="Clement I."/>
            <person name="Boespflug-Tanguy O."/>
            <person name="Rodriguez D."/>
            <person name="Delague V."/>
            <person name="Abou Ghoch J."/>
            <person name="Jalkh N."/>
            <person name="Dorboz I."/>
            <person name="Fribourg S."/>
            <person name="Teichmann M."/>
            <person name="Megarbane A."/>
            <person name="Schiffmann R."/>
            <person name="Vanderver A."/>
            <person name="Brais B."/>
        </authorList>
    </citation>
    <scope>VARIANTS HLD7 ASN-372; LEU-558; TYR-636; GLU-672; TYR-724; ILE-775; VAL-852 AND THR-1247 INS</scope>
    <scope>INVOLVEMENT IN HLD7</scope>
    <scope>TISSUE SPECIFICITY</scope>
</reference>
<reference key="20">
    <citation type="journal article" date="2011" name="Am. J. Hum. Genet.">
        <title>Mutations in POLR3A and POLR3B encoding RNA Polymerase III subunits cause an autosomal-recessive hypomyelinating leukoencephalopathy.</title>
        <authorList>
            <person name="Saitsu H."/>
            <person name="Osaka H."/>
            <person name="Sasaki M."/>
            <person name="Takanashi J."/>
            <person name="Hamada K."/>
            <person name="Yamashita A."/>
            <person name="Shibayama H."/>
            <person name="Shiina M."/>
            <person name="Kondo Y."/>
            <person name="Nishiyama K."/>
            <person name="Tsurusaki Y."/>
            <person name="Miyake N."/>
            <person name="Doi H."/>
            <person name="Ogata K."/>
            <person name="Inoue K."/>
            <person name="Matsumoto N."/>
        </authorList>
    </citation>
    <scope>VARIANTS HLD7 ASN-897 AND CYS-1005</scope>
</reference>
<reference key="21">
    <citation type="journal article" date="2013" name="J. Med. Genet.">
        <title>Mutations in POLR3A and POLR3B are a major cause of hypomyelinating leukodystrophies with or without dental abnormalities and/or hypogonadotropic hypogonadism.</title>
        <authorList>
            <person name="Daoud H."/>
            <person name="Tetreault M."/>
            <person name="Gibson W."/>
            <person name="Guerrero K."/>
            <person name="Cohen A."/>
            <person name="Gburek-Augustat J."/>
            <person name="Synofzik M."/>
            <person name="Brais B."/>
            <person name="Stevens C.A."/>
            <person name="Sanchez-Carpintero R."/>
            <person name="Goizet C."/>
            <person name="Naidu S."/>
            <person name="Vanderver A."/>
            <person name="Bernard G."/>
        </authorList>
    </citation>
    <scope>VARIANTS HLD7 LEU-91; GLY-387; ARG-602; VAL-852; CYS-1005 AND LYS-1261</scope>
</reference>
<reference key="22">
    <citation type="journal article" date="2014" name="Brain Dev.">
        <title>Novel compound heterozygous mutations of POLR3A revealed by whole-exome sequencing in a patient with hypomyelination.</title>
        <authorList>
            <person name="Shimojima K."/>
            <person name="Shimada S."/>
            <person name="Tamasaki A."/>
            <person name="Akaboshi S."/>
            <person name="Komoike Y."/>
            <person name="Saito A."/>
            <person name="Furukawa T."/>
            <person name="Yamamoto T."/>
        </authorList>
    </citation>
    <scope>VARIANTS HLD7 CYS-310 AND THR-804</scope>
</reference>
<reference key="23">
    <citation type="journal article" date="2016" name="Am. J. Med. Genet. A">
        <title>Neonatal progeriod syndrome associated with biallelic truncating variants in POLR3A.</title>
        <authorList>
            <person name="Jay A.M."/>
            <person name="Conway R.L."/>
            <person name="Thiffault I."/>
            <person name="Saunders C."/>
            <person name="Farrow E."/>
            <person name="Adams J."/>
            <person name="Toriello H.V."/>
        </authorList>
    </citation>
    <scope>VARIANT WDRTS 873-ARG--THR-1390 DEL</scope>
    <scope>INVOLVEMENT IN WDRTS</scope>
</reference>
<reference key="24">
    <citation type="journal article" date="2018" name="Am. J. Hum. Genet.">
        <title>Bi-allelic POLR3A loss-of-function variants cause autosomal-recessive Wiedemann-Rautenstrauch syndrome.</title>
        <authorList>
            <person name="Wambach J.A."/>
            <person name="Wegner D.J."/>
            <person name="Patni N."/>
            <person name="Kircher M."/>
            <person name="Willing M.C."/>
            <person name="Baldridge D."/>
            <person name="Xing C."/>
            <person name="Agarwal A.K."/>
            <person name="Vergano S.A.S."/>
            <person name="Patel C."/>
            <person name="Grange D.K."/>
            <person name="Kenney A."/>
            <person name="Najaf T."/>
            <person name="Nickerson D.A."/>
            <person name="Bamshad M.J."/>
            <person name="Cole F.S."/>
            <person name="Garg A."/>
        </authorList>
    </citation>
    <scope>VARIANTS WDRTS 254-ARG--THR-1390 DEL AND 669-ARG--THR-1390 DEL</scope>
    <scope>INVOLVEMENT IN WDRTS</scope>
</reference>
<reference key="25">
    <citation type="journal article" date="2018" name="Hum. Genet.">
        <title>Analyses of LMNA-negative juvenile progeroid cases confirms biallelic POLR3A mutations in Wiedemann-Rautenstrauch-like syndrome and expands the phenotypic spectrum of PYCR1 mutations.</title>
        <authorList>
            <person name="Lessel D."/>
            <person name="Ozel A.B."/>
            <person name="Campbell S.E."/>
            <person name="Saadi A."/>
            <person name="Arlt M.F."/>
            <person name="McSweeney K.M."/>
            <person name="Plaiasu V."/>
            <person name="Szakszon K."/>
            <person name="Szollos A."/>
            <person name="Rusu C."/>
            <person name="Rojas A.J."/>
            <person name="Lopez-Valdez J."/>
            <person name="Thiele H."/>
            <person name="Nuernberg P."/>
            <person name="Nickerson D.A."/>
            <person name="Bamshad M.J."/>
            <person name="Li J.Z."/>
            <person name="Kubisch C."/>
            <person name="Glover T.W."/>
            <person name="Gordon L.B."/>
        </authorList>
    </citation>
    <scope>VARIANT WDRTS 254-ARG--THR-1390 DEL</scope>
    <scope>INVOLVEMENT IN WDRTS</scope>
</reference>
<reference key="26">
    <citation type="journal article" date="2018" name="J. Med. Genet.">
        <title>Specific combinations of biallelic POLR3A variants cause Wiedemann-Rautenstrauch syndrome.</title>
        <authorList>
            <person name="Paolacci S."/>
            <person name="Li Y."/>
            <person name="Agolini E."/>
            <person name="Bellacchio E."/>
            <person name="Arboleda-Bustos C.E."/>
            <person name="Carrero D."/>
            <person name="Bertola D."/>
            <person name="Al-Gazali L."/>
            <person name="Alders M."/>
            <person name="Altmueller J."/>
            <person name="Arboleda G."/>
            <person name="Beleggia F."/>
            <person name="Bruselles A."/>
            <person name="Ciolfi A."/>
            <person name="Gillessen-Kaesbach G."/>
            <person name="Krieg T."/>
            <person name="Mohammed S."/>
            <person name="Mueller C."/>
            <person name="Novelli A."/>
            <person name="Ortega J."/>
            <person name="Sandoval A."/>
            <person name="Velasco G."/>
            <person name="Yigit G."/>
            <person name="Arboleda H."/>
            <person name="Lopez-Otin C."/>
            <person name="Wollnik B."/>
            <person name="Tartaglia M."/>
            <person name="Hennekam R.C."/>
        </authorList>
    </citation>
    <scope>VARIANTS WDRTS 825-SER--THR-1390 DEL; ARG-903; GLN-1069; ARG-1131; ASN-1292 AND ARG-1335</scope>
    <scope>INVOLVEMENT IN WDRTS</scope>
</reference>
<protein>
    <recommendedName>
        <fullName>DNA-directed RNA polymerase III subunit RPC1</fullName>
        <shortName>RNA polymerase III subunit C1</shortName>
        <ecNumber evidence="7 8 18 19 22 24">2.7.7.6</ecNumber>
    </recommendedName>
    <alternativeName>
        <fullName>DNA-directed RNA polymerase III largest subunit</fullName>
    </alternativeName>
    <alternativeName>
        <fullName>DNA-directed RNA polymerase III subunit A</fullName>
    </alternativeName>
    <alternativeName>
        <fullName>RNA polymerase III 155 kDa subunit</fullName>
        <shortName evidence="25">RPC155</shortName>
    </alternativeName>
    <alternativeName>
        <fullName>RNA polymerase III subunit C160</fullName>
    </alternativeName>
</protein>
<name>RPC1_HUMAN</name>
<feature type="chain" id="PRO_0000073947" description="DNA-directed RNA polymerase III subunit RPC1">
    <location>
        <begin position="1"/>
        <end position="1390"/>
    </location>
</feature>
<feature type="region of interest" description="Bridging helix" evidence="2">
    <location>
        <begin position="843"/>
        <end position="884"/>
    </location>
</feature>
<feature type="region of interest" description="Trigger loop" evidence="2">
    <location>
        <begin position="1029"/>
        <end position="1070"/>
    </location>
</feature>
<feature type="binding site" evidence="19 20 21 22 29 30 31 32">
    <location>
        <position position="69"/>
    </location>
    <ligand>
        <name>Zn(2+)</name>
        <dbReference type="ChEBI" id="CHEBI:29105"/>
        <label>1</label>
    </ligand>
</feature>
<feature type="binding site" evidence="19 20 21 22 29 30 31 32">
    <location>
        <position position="72"/>
    </location>
    <ligand>
        <name>Zn(2+)</name>
        <dbReference type="ChEBI" id="CHEBI:29105"/>
        <label>1</label>
    </ligand>
</feature>
<feature type="binding site" evidence="19 21 22 29 31 32">
    <location>
        <position position="79"/>
    </location>
    <ligand>
        <name>Zn(2+)</name>
        <dbReference type="ChEBI" id="CHEBI:29105"/>
        <label>1</label>
    </ligand>
</feature>
<feature type="binding site" evidence="20 21 22 30 31 32">
    <location>
        <position position="82"/>
    </location>
    <ligand>
        <name>Zn(2+)</name>
        <dbReference type="ChEBI" id="CHEBI:29105"/>
        <label>1</label>
    </ligand>
</feature>
<feature type="binding site" evidence="19 20 29 30">
    <location>
        <position position="109"/>
    </location>
    <ligand>
        <name>Zn(2+)</name>
        <dbReference type="ChEBI" id="CHEBI:29105"/>
        <label>2</label>
    </ligand>
</feature>
<feature type="binding site" evidence="19 20 29 30">
    <location>
        <position position="112"/>
    </location>
    <ligand>
        <name>Zn(2+)</name>
        <dbReference type="ChEBI" id="CHEBI:29105"/>
        <label>2</label>
    </ligand>
</feature>
<feature type="binding site" evidence="21 31">
    <location>
        <position position="144"/>
    </location>
    <ligand>
        <name>DNA</name>
        <dbReference type="ChEBI" id="CHEBI:16991"/>
        <label>nontemplate strand</label>
    </ligand>
</feature>
<feature type="binding site" evidence="19 21 29 31">
    <location>
        <position position="156"/>
    </location>
    <ligand>
        <name>Zn(2+)</name>
        <dbReference type="ChEBI" id="CHEBI:29105"/>
        <label>2</label>
    </ligand>
</feature>
<feature type="binding site" evidence="19 21 29 31">
    <location>
        <position position="159"/>
    </location>
    <ligand>
        <name>Zn(2+)</name>
        <dbReference type="ChEBI" id="CHEBI:29105"/>
        <label>2</label>
    </ligand>
</feature>
<feature type="binding site" evidence="19 29">
    <location>
        <position position="167"/>
    </location>
    <ligand>
        <name>DNA</name>
        <dbReference type="ChEBI" id="CHEBI:16991"/>
        <label>nontemplate strand</label>
    </ligand>
</feature>
<feature type="binding site" evidence="20 30">
    <location>
        <position position="326"/>
    </location>
    <ligand>
        <name>DNA</name>
        <dbReference type="ChEBI" id="CHEBI:16991"/>
        <label>template strand</label>
    </ligand>
</feature>
<feature type="binding site" evidence="20 30">
    <location>
        <position position="348"/>
    </location>
    <ligand>
        <name>DNA</name>
        <dbReference type="ChEBI" id="CHEBI:16991"/>
        <label>template strand</label>
    </ligand>
</feature>
<feature type="binding site" evidence="19 21 28 31">
    <location>
        <position position="353"/>
    </location>
    <ligand>
        <name>DNA</name>
        <dbReference type="ChEBI" id="CHEBI:16991"/>
        <label>template strand</label>
    </ligand>
</feature>
<feature type="binding site" evidence="19 21 22 29 31 32">
    <location>
        <position position="360"/>
    </location>
    <ligand>
        <name>DNA</name>
        <dbReference type="ChEBI" id="CHEBI:16991"/>
        <label>template strand</label>
    </ligand>
</feature>
<feature type="binding site" evidence="21 31">
    <location>
        <position position="366"/>
    </location>
    <ligand>
        <name>DNA</name>
        <dbReference type="ChEBI" id="CHEBI:16991"/>
        <label>template strand</label>
    </ligand>
</feature>
<feature type="binding site" evidence="19 20 21 29 30 31">
    <location>
        <position position="464"/>
    </location>
    <ligand>
        <name>RNA</name>
        <dbReference type="ChEBI" id="CHEBI:33697"/>
    </ligand>
</feature>
<feature type="binding site" evidence="19 21 22 29 31 32">
    <location>
        <position position="499"/>
    </location>
    <ligand>
        <name>Mg(2+)</name>
        <dbReference type="ChEBI" id="CHEBI:18420"/>
        <label>1</label>
        <note>catalytic</note>
    </ligand>
</feature>
<feature type="binding site" evidence="4">
    <location>
        <position position="499"/>
    </location>
    <ligand>
        <name>Mg(2+)</name>
        <dbReference type="ChEBI" id="CHEBI:18420"/>
        <label>2</label>
        <note>ligand shared with POLR3B/RPC2</note>
    </ligand>
</feature>
<feature type="binding site" evidence="19 21 22 29 31 32">
    <location>
        <position position="501"/>
    </location>
    <ligand>
        <name>Mg(2+)</name>
        <dbReference type="ChEBI" id="CHEBI:18420"/>
        <label>1</label>
        <note>catalytic</note>
    </ligand>
</feature>
<feature type="binding site" evidence="3">
    <location>
        <position position="501"/>
    </location>
    <ligand>
        <name>Mg(2+)</name>
        <dbReference type="ChEBI" id="CHEBI:18420"/>
        <label>2</label>
        <note>ligand shared with POLR3B/RPC2</note>
    </ligand>
</feature>
<feature type="binding site" evidence="19 21 22 29 31 32">
    <location>
        <position position="503"/>
    </location>
    <ligand>
        <name>Mg(2+)</name>
        <dbReference type="ChEBI" id="CHEBI:18420"/>
        <label>1</label>
        <note>catalytic</note>
    </ligand>
</feature>
<feature type="binding site" evidence="19 20 21 29 30 31">
    <location>
        <position position="503"/>
    </location>
    <ligand>
        <name>RNA</name>
        <dbReference type="ChEBI" id="CHEBI:33697"/>
    </ligand>
</feature>
<feature type="binding site" evidence="19 22 29 32">
    <location>
        <position position="1159"/>
    </location>
    <ligand>
        <name>DNA</name>
        <dbReference type="ChEBI" id="CHEBI:16991"/>
        <label>nontemplate strand</label>
    </ligand>
</feature>
<feature type="binding site" evidence="20 30">
    <location>
        <position position="1305"/>
    </location>
    <ligand>
        <name>DNA</name>
        <dbReference type="ChEBI" id="CHEBI:16991"/>
        <label>template strand</label>
    </ligand>
</feature>
<feature type="binding site" evidence="21 31">
    <location>
        <position position="1323"/>
    </location>
    <ligand>
        <name>DNA</name>
        <dbReference type="ChEBI" id="CHEBI:16991"/>
        <label>template strand</label>
    </ligand>
</feature>
<feature type="modified residue" description="N6-acetyllysine" evidence="33">
    <location>
        <position position="445"/>
    </location>
</feature>
<feature type="sequence variant" id="VAR_072338" description="In HLD7; dbSNP:rs1375717376." evidence="12">
    <original>P</original>
    <variation>L</variation>
    <location>
        <position position="91"/>
    </location>
</feature>
<feature type="sequence variant" id="VAR_081999" description="In WDRTS." evidence="16 17">
    <location>
        <begin position="254"/>
        <end position="1390"/>
    </location>
</feature>
<feature type="sequence variant" id="VAR_072339" description="In HLD7; dbSNP:rs1217230904." evidence="13">
    <original>W</original>
    <variation>C</variation>
    <location>
        <position position="310"/>
    </location>
</feature>
<feature type="sequence variant" id="VAR_066516" description="In HLD7; dbSNP:rs267608673." evidence="10">
    <original>D</original>
    <variation>N</variation>
    <location>
        <position position="372"/>
    </location>
</feature>
<feature type="sequence variant" id="VAR_072340" description="In HLD7; dbSNP:rs1307896663." evidence="12">
    <original>A</original>
    <variation>G</variation>
    <location>
        <position position="387"/>
    </location>
</feature>
<feature type="sequence variant" id="VAR_066517" description="In HLD7; dbSNP:rs267608668." evidence="10">
    <original>F</original>
    <variation>L</variation>
    <location>
        <position position="558"/>
    </location>
</feature>
<feature type="sequence variant" id="VAR_051873" description="In dbSNP:rs34588967.">
    <original>R</original>
    <variation>L</variation>
    <location>
        <position position="582"/>
    </location>
</feature>
<feature type="sequence variant" id="VAR_072341" description="In HLD7; dbSNP:rs762708292." evidence="12">
    <original>S</original>
    <variation>R</variation>
    <location>
        <position position="602"/>
    </location>
</feature>
<feature type="sequence variant" id="VAR_066518" description="In HLD7; dbSNP:rs267608676." evidence="10">
    <original>S</original>
    <variation>Y</variation>
    <location>
        <position position="636"/>
    </location>
</feature>
<feature type="sequence variant" id="VAR_082000" description="In WDRTS." evidence="16">
    <location>
        <begin position="669"/>
        <end position="1390"/>
    </location>
</feature>
<feature type="sequence variant" id="VAR_066519" description="In HLD7; dbSNP:rs267608670." evidence="10">
    <original>G</original>
    <variation>E</variation>
    <location>
        <position position="672"/>
    </location>
</feature>
<feature type="sequence variant" id="VAR_051874" description="In dbSNP:rs35354908.">
    <original>K</original>
    <variation>N</variation>
    <location>
        <position position="713"/>
    </location>
</feature>
<feature type="sequence variant" id="VAR_066520" description="In HLD7; dbSNP:rs267608679." evidence="10">
    <original>C</original>
    <variation>Y</variation>
    <location>
        <position position="724"/>
    </location>
</feature>
<feature type="sequence variant" id="VAR_066521" description="In HLD7; dbSNP:rs267608672." evidence="10">
    <original>N</original>
    <variation>I</variation>
    <location>
        <position position="775"/>
    </location>
</feature>
<feature type="sequence variant" id="VAR_072342" description="In HLD7; dbSNP:rs1847352019." evidence="13">
    <original>I</original>
    <variation>T</variation>
    <location>
        <position position="804"/>
    </location>
</feature>
<feature type="sequence variant" id="VAR_082001" description="In WDRTS." evidence="15">
    <location>
        <begin position="825"/>
        <end position="1390"/>
    </location>
</feature>
<feature type="sequence variant" id="VAR_066522" description="In HLD7; dbSNP:rs267608671." evidence="10 12">
    <original>M</original>
    <variation>V</variation>
    <location>
        <position position="852"/>
    </location>
</feature>
<feature type="sequence variant" id="VAR_082002" description="In WDRTS." evidence="14">
    <location>
        <begin position="873"/>
        <end position="1390"/>
    </location>
</feature>
<feature type="sequence variant" id="VAR_067004" description="In HLD7; dbSNP:rs267608681." evidence="11">
    <original>I</original>
    <variation>N</variation>
    <location>
        <position position="897"/>
    </location>
</feature>
<feature type="sequence variant" id="VAR_082003" description="In WDRTS; uncertain significance; dbSNP:rs1399429058." evidence="15">
    <original>G</original>
    <variation>R</variation>
    <location>
        <position position="903"/>
    </location>
</feature>
<feature type="sequence variant" id="VAR_066523" description="In HLD7; dbSNP:rs267608682." evidence="11 12">
    <original>R</original>
    <variation>C</variation>
    <location>
        <position position="1005"/>
    </location>
</feature>
<feature type="sequence variant" id="VAR_082004" description="In WDRTS; uncertain significance; dbSNP:rs778985686." evidence="15">
    <original>R</original>
    <variation>Q</variation>
    <location>
        <position position="1069"/>
    </location>
</feature>
<feature type="sequence variant" id="VAR_082005" description="In WDRTS; uncertain significance; dbSNP:rs138305578." evidence="15">
    <original>K</original>
    <variation>R</variation>
    <location>
        <position position="1131"/>
    </location>
</feature>
<feature type="sequence variant" id="VAR_066524" description="In HLD7." evidence="10">
    <original>T</original>
    <variation>TT</variation>
    <location>
        <position position="1247"/>
    </location>
</feature>
<feature type="sequence variant" id="VAR_072343" description="In HLD7; dbSNP:rs371703979." evidence="12">
    <original>E</original>
    <variation>K</variation>
    <location>
        <position position="1261"/>
    </location>
</feature>
<feature type="sequence variant" id="VAR_082006" description="In WDRTS; uncertain significance; dbSNP:rs757209071." evidence="15">
    <original>D</original>
    <variation>N</variation>
    <location>
        <position position="1292"/>
    </location>
</feature>
<feature type="sequence variant" id="VAR_082007" description="In WDRTS; uncertain significance; dbSNP:rs768222183." evidence="15">
    <original>G</original>
    <variation>R</variation>
    <location>
        <position position="1335"/>
    </location>
</feature>
<feature type="sequence conflict" description="In Ref. 1; AAB86536." evidence="26" ref="1">
    <original>I</original>
    <variation>T</variation>
    <location>
        <position position="15"/>
    </location>
</feature>
<feature type="sequence conflict" description="In Ref. 1; AAB86536." evidence="26" ref="1">
    <original>I</original>
    <variation>F</variation>
    <location>
        <position position="262"/>
    </location>
</feature>
<feature type="sequence conflict" description="In Ref. 5; AAM12029." evidence="26" ref="5">
    <original>L</original>
    <variation>P</variation>
    <location>
        <position position="283"/>
    </location>
</feature>
<feature type="sequence conflict" description="In Ref. 1; AAB86536." evidence="26" ref="1">
    <original>A</original>
    <variation>G</variation>
    <location>
        <position position="1056"/>
    </location>
</feature>
<feature type="sequence conflict" description="In Ref. 1; AAB86536." evidence="26" ref="1">
    <original>M</original>
    <variation>MV</variation>
    <location>
        <position position="1275"/>
    </location>
</feature>
<feature type="strand" evidence="34">
    <location>
        <begin position="12"/>
        <end position="21"/>
    </location>
</feature>
<feature type="helix" evidence="34">
    <location>
        <begin position="25"/>
        <end position="31"/>
    </location>
</feature>
<feature type="strand" evidence="34">
    <location>
        <begin position="33"/>
        <end position="35"/>
    </location>
</feature>
<feature type="strand" evidence="36">
    <location>
        <begin position="44"/>
        <end position="47"/>
    </location>
</feature>
<feature type="strand" evidence="36">
    <location>
        <begin position="54"/>
        <end position="56"/>
    </location>
</feature>
<feature type="helix" evidence="34">
    <location>
        <begin position="58"/>
        <end position="60"/>
    </location>
</feature>
<feature type="strand" evidence="36">
    <location>
        <begin position="64"/>
        <end position="67"/>
    </location>
</feature>
<feature type="strand" evidence="34">
    <location>
        <begin position="70"/>
        <end position="72"/>
    </location>
</feature>
<feature type="turn" evidence="34">
    <location>
        <begin position="76"/>
        <end position="78"/>
    </location>
</feature>
<feature type="strand" evidence="34">
    <location>
        <begin position="84"/>
        <end position="93"/>
    </location>
</feature>
<feature type="turn" evidence="34">
    <location>
        <begin position="95"/>
        <end position="97"/>
    </location>
</feature>
<feature type="helix" evidence="34">
    <location>
        <begin position="98"/>
        <end position="107"/>
    </location>
</feature>
<feature type="turn" evidence="34">
    <location>
        <begin position="110"/>
        <end position="112"/>
    </location>
</feature>
<feature type="helix" evidence="34">
    <location>
        <begin position="119"/>
        <end position="128"/>
    </location>
</feature>
<feature type="strand" evidence="35">
    <location>
        <begin position="131"/>
        <end position="133"/>
    </location>
</feature>
<feature type="helix" evidence="34">
    <location>
        <begin position="136"/>
        <end position="151"/>
    </location>
</feature>
<feature type="strand" evidence="34">
    <location>
        <begin position="157"/>
        <end position="159"/>
    </location>
</feature>
<feature type="strand" evidence="34">
    <location>
        <begin position="166"/>
        <end position="168"/>
    </location>
</feature>
<feature type="turn" evidence="36">
    <location>
        <begin position="170"/>
        <end position="172"/>
    </location>
</feature>
<feature type="strand" evidence="34">
    <location>
        <begin position="174"/>
        <end position="176"/>
    </location>
</feature>
<feature type="strand" evidence="34">
    <location>
        <begin position="183"/>
        <end position="185"/>
    </location>
</feature>
<feature type="helix" evidence="34">
    <location>
        <begin position="188"/>
        <end position="195"/>
    </location>
</feature>
<feature type="helix" evidence="34">
    <location>
        <begin position="198"/>
        <end position="203"/>
    </location>
</feature>
<feature type="helix" evidence="34">
    <location>
        <begin position="207"/>
        <end position="210"/>
    </location>
</feature>
<feature type="helix" evidence="34">
    <location>
        <begin position="211"/>
        <end position="213"/>
    </location>
</feature>
<feature type="strand" evidence="34">
    <location>
        <begin position="216"/>
        <end position="218"/>
    </location>
</feature>
<feature type="helix" evidence="34">
    <location>
        <begin position="220"/>
        <end position="227"/>
    </location>
</feature>
<feature type="turn" evidence="34">
    <location>
        <begin position="232"/>
        <end position="234"/>
    </location>
</feature>
<feature type="helix" evidence="34">
    <location>
        <begin position="236"/>
        <end position="238"/>
    </location>
</feature>
<feature type="turn" evidence="34">
    <location>
        <begin position="242"/>
        <end position="244"/>
    </location>
</feature>
<feature type="helix" evidence="34">
    <location>
        <begin position="247"/>
        <end position="250"/>
    </location>
</feature>
<feature type="strand" evidence="34">
    <location>
        <begin position="251"/>
        <end position="257"/>
    </location>
</feature>
<feature type="helix" evidence="34">
    <location>
        <begin position="260"/>
        <end position="262"/>
    </location>
</feature>
<feature type="strand" evidence="36">
    <location>
        <begin position="266"/>
        <end position="268"/>
    </location>
</feature>
<feature type="turn" evidence="36">
    <location>
        <begin position="269"/>
        <end position="272"/>
    </location>
</feature>
<feature type="strand" evidence="36">
    <location>
        <begin position="273"/>
        <end position="275"/>
    </location>
</feature>
<feature type="helix" evidence="34">
    <location>
        <begin position="278"/>
        <end position="299"/>
    </location>
</feature>
<feature type="helix" evidence="34">
    <location>
        <begin position="303"/>
        <end position="321"/>
    </location>
</feature>
<feature type="turn" evidence="34">
    <location>
        <begin position="330"/>
        <end position="332"/>
    </location>
</feature>
<feature type="helix" evidence="34">
    <location>
        <begin position="341"/>
        <end position="345"/>
    </location>
</feature>
<feature type="turn" evidence="38">
    <location>
        <begin position="347"/>
        <end position="349"/>
    </location>
</feature>
<feature type="helix" evidence="34">
    <location>
        <begin position="351"/>
        <end position="354"/>
    </location>
</feature>
<feature type="turn" evidence="34">
    <location>
        <begin position="355"/>
        <end position="357"/>
    </location>
</feature>
<feature type="strand" evidence="34">
    <location>
        <begin position="358"/>
        <end position="371"/>
    </location>
</feature>
<feature type="strand" evidence="34">
    <location>
        <begin position="379"/>
        <end position="383"/>
    </location>
</feature>
<feature type="helix" evidence="34">
    <location>
        <begin position="384"/>
        <end position="387"/>
    </location>
</feature>
<feature type="strand" evidence="34">
    <location>
        <begin position="390"/>
        <end position="395"/>
    </location>
</feature>
<feature type="turn" evidence="34">
    <location>
        <begin position="398"/>
        <end position="400"/>
    </location>
</feature>
<feature type="helix" evidence="34">
    <location>
        <begin position="401"/>
        <end position="410"/>
    </location>
</feature>
<feature type="turn" evidence="35">
    <location>
        <begin position="411"/>
        <end position="413"/>
    </location>
</feature>
<feature type="strand" evidence="34">
    <location>
        <begin position="414"/>
        <end position="416"/>
    </location>
</feature>
<feature type="strand" evidence="34">
    <location>
        <begin position="418"/>
        <end position="422"/>
    </location>
</feature>
<feature type="strand" evidence="36">
    <location>
        <begin position="424"/>
        <end position="426"/>
    </location>
</feature>
<feature type="strand" evidence="36">
    <location>
        <begin position="429"/>
        <end position="435"/>
    </location>
</feature>
<feature type="helix" evidence="34">
    <location>
        <begin position="437"/>
        <end position="442"/>
    </location>
</feature>
<feature type="strand" evidence="34">
    <location>
        <begin position="449"/>
        <end position="453"/>
    </location>
</feature>
<feature type="strand" evidence="34">
    <location>
        <begin position="459"/>
        <end position="463"/>
    </location>
</feature>
<feature type="helix" evidence="34">
    <location>
        <begin position="470"/>
        <end position="472"/>
    </location>
</feature>
<feature type="strand" evidence="34">
    <location>
        <begin position="473"/>
        <end position="488"/>
    </location>
</feature>
<feature type="helix" evidence="34">
    <location>
        <begin position="490"/>
        <end position="492"/>
    </location>
</feature>
<feature type="helix" evidence="34">
    <location>
        <begin position="493"/>
        <end position="496"/>
    </location>
</feature>
<feature type="strand" evidence="36">
    <location>
        <begin position="500"/>
        <end position="502"/>
    </location>
</feature>
<feature type="strand" evidence="34">
    <location>
        <begin position="504"/>
        <end position="508"/>
    </location>
</feature>
<feature type="helix" evidence="34">
    <location>
        <begin position="513"/>
        <end position="523"/>
    </location>
</feature>
<feature type="helix" evidence="34">
    <location>
        <begin position="525"/>
        <end position="527"/>
    </location>
</feature>
<feature type="turn" evidence="34">
    <location>
        <begin position="532"/>
        <end position="534"/>
    </location>
</feature>
<feature type="strand" evidence="35">
    <location>
        <begin position="539"/>
        <end position="541"/>
    </location>
</feature>
<feature type="turn" evidence="34">
    <location>
        <begin position="543"/>
        <end position="545"/>
    </location>
</feature>
<feature type="helix" evidence="34">
    <location>
        <begin position="547"/>
        <end position="552"/>
    </location>
</feature>
<feature type="strand" evidence="36">
    <location>
        <begin position="553"/>
        <end position="555"/>
    </location>
</feature>
<feature type="helix" evidence="34">
    <location>
        <begin position="561"/>
        <end position="568"/>
    </location>
</feature>
<feature type="helix" evidence="34">
    <location>
        <begin position="569"/>
        <end position="571"/>
    </location>
</feature>
<feature type="helix" evidence="34">
    <location>
        <begin position="574"/>
        <end position="578"/>
    </location>
</feature>
<feature type="strand" evidence="34">
    <location>
        <begin position="590"/>
        <end position="592"/>
    </location>
</feature>
<feature type="strand" evidence="34">
    <location>
        <begin position="594"/>
        <end position="596"/>
    </location>
</feature>
<feature type="helix" evidence="34">
    <location>
        <begin position="597"/>
        <end position="605"/>
    </location>
</feature>
<feature type="strand" evidence="36">
    <location>
        <begin position="608"/>
        <end position="611"/>
    </location>
</feature>
<feature type="strand" evidence="34">
    <location>
        <begin position="616"/>
        <end position="620"/>
    </location>
</feature>
<feature type="strand" evidence="36">
    <location>
        <begin position="627"/>
        <end position="631"/>
    </location>
</feature>
<feature type="strand" evidence="34">
    <location>
        <begin position="637"/>
        <end position="641"/>
    </location>
</feature>
<feature type="strand" evidence="34">
    <location>
        <begin position="644"/>
        <end position="647"/>
    </location>
</feature>
<feature type="helix" evidence="34">
    <location>
        <begin position="652"/>
        <end position="655"/>
    </location>
</feature>
<feature type="strand" evidence="34">
    <location>
        <begin position="656"/>
        <end position="661"/>
    </location>
</feature>
<feature type="helix" evidence="34">
    <location>
        <begin position="663"/>
        <end position="671"/>
    </location>
</feature>
<feature type="helix" evidence="34">
    <location>
        <begin position="673"/>
        <end position="694"/>
    </location>
</feature>
<feature type="helix" evidence="34">
    <location>
        <begin position="700"/>
        <end position="702"/>
    </location>
</feature>
<feature type="helix" evidence="34">
    <location>
        <begin position="707"/>
        <end position="732"/>
    </location>
</feature>
<feature type="strand" evidence="36">
    <location>
        <begin position="739"/>
        <end position="741"/>
    </location>
</feature>
<feature type="helix" evidence="34">
    <location>
        <begin position="744"/>
        <end position="770"/>
    </location>
</feature>
<feature type="helix" evidence="34">
    <location>
        <begin position="776"/>
        <end position="782"/>
    </location>
</feature>
<feature type="strand" evidence="38">
    <location>
        <begin position="783"/>
        <end position="786"/>
    </location>
</feature>
<feature type="helix" evidence="34">
    <location>
        <begin position="789"/>
        <end position="796"/>
    </location>
</feature>
<feature type="strand" evidence="37">
    <location>
        <begin position="804"/>
        <end position="807"/>
    </location>
</feature>
<feature type="strand" evidence="36">
    <location>
        <begin position="812"/>
        <end position="815"/>
    </location>
</feature>
<feature type="strand" evidence="34">
    <location>
        <begin position="816"/>
        <end position="818"/>
    </location>
</feature>
<feature type="helix" evidence="34">
    <location>
        <begin position="829"/>
        <end position="831"/>
    </location>
</feature>
<feature type="turn" evidence="34">
    <location>
        <begin position="838"/>
        <end position="840"/>
    </location>
</feature>
<feature type="helix" evidence="34">
    <location>
        <begin position="844"/>
        <end position="879"/>
    </location>
</feature>
<feature type="strand" evidence="35">
    <location>
        <begin position="893"/>
        <end position="895"/>
    </location>
</feature>
<feature type="strand" evidence="34">
    <location>
        <begin position="897"/>
        <end position="901"/>
    </location>
</feature>
<feature type="turn" evidence="34">
    <location>
        <begin position="902"/>
        <end position="905"/>
    </location>
</feature>
<feature type="helix" evidence="34">
    <location>
        <begin position="909"/>
        <end position="911"/>
    </location>
</feature>
<feature type="strand" evidence="34">
    <location>
        <begin position="913"/>
        <end position="918"/>
    </location>
</feature>
<feature type="helix" evidence="34">
    <location>
        <begin position="921"/>
        <end position="931"/>
    </location>
</feature>
<feature type="strand" evidence="37">
    <location>
        <begin position="935"/>
        <end position="937"/>
    </location>
</feature>
<feature type="helix" evidence="34">
    <location>
        <begin position="942"/>
        <end position="952"/>
    </location>
</feature>
<feature type="helix" evidence="34">
    <location>
        <begin position="956"/>
        <end position="960"/>
    </location>
</feature>
<feature type="helix" evidence="34">
    <location>
        <begin position="963"/>
        <end position="987"/>
    </location>
</feature>
<feature type="strand" evidence="37">
    <location>
        <begin position="991"/>
        <end position="993"/>
    </location>
</feature>
<feature type="helix" evidence="34">
    <location>
        <begin position="998"/>
        <end position="1002"/>
    </location>
</feature>
<feature type="helix" evidence="34">
    <location>
        <begin position="1008"/>
        <end position="1023"/>
    </location>
</feature>
<feature type="helix" evidence="34">
    <location>
        <begin position="1033"/>
        <end position="1047"/>
    </location>
</feature>
<feature type="turn" evidence="34">
    <location>
        <begin position="1056"/>
        <end position="1059"/>
    </location>
</feature>
<feature type="helix" evidence="34">
    <location>
        <begin position="1067"/>
        <end position="1075"/>
    </location>
</feature>
<feature type="strand" evidence="34">
    <location>
        <begin position="1085"/>
        <end position="1091"/>
    </location>
</feature>
<feature type="helix" evidence="34">
    <location>
        <begin position="1095"/>
        <end position="1105"/>
    </location>
</feature>
<feature type="helix" evidence="34">
    <location>
        <begin position="1110"/>
        <end position="1112"/>
    </location>
</feature>
<feature type="strand" evidence="34">
    <location>
        <begin position="1114"/>
        <end position="1121"/>
    </location>
</feature>
<feature type="strand" evidence="34">
    <location>
        <begin position="1126"/>
        <end position="1132"/>
    </location>
</feature>
<feature type="helix" evidence="34">
    <location>
        <begin position="1134"/>
        <end position="1140"/>
    </location>
</feature>
<feature type="helix" evidence="34">
    <location>
        <begin position="1146"/>
        <end position="1152"/>
    </location>
</feature>
<feature type="strand" evidence="34">
    <location>
        <begin position="1153"/>
        <end position="1157"/>
    </location>
</feature>
<feature type="turn" evidence="35">
    <location>
        <begin position="1162"/>
        <end position="1164"/>
    </location>
</feature>
<feature type="strand" evidence="34">
    <location>
        <begin position="1165"/>
        <end position="1169"/>
    </location>
</feature>
<feature type="strand" evidence="34">
    <location>
        <begin position="1172"/>
        <end position="1175"/>
    </location>
</feature>
<feature type="strand" evidence="36">
    <location>
        <begin position="1181"/>
        <end position="1183"/>
    </location>
</feature>
<feature type="turn" evidence="34">
    <location>
        <begin position="1186"/>
        <end position="1188"/>
    </location>
</feature>
<feature type="helix" evidence="34">
    <location>
        <begin position="1189"/>
        <end position="1195"/>
    </location>
</feature>
<feature type="helix" evidence="35">
    <location>
        <begin position="1196"/>
        <end position="1198"/>
    </location>
</feature>
<feature type="strand" evidence="34">
    <location>
        <begin position="1199"/>
        <end position="1203"/>
    </location>
</feature>
<feature type="strand" evidence="34">
    <location>
        <begin position="1209"/>
        <end position="1214"/>
    </location>
</feature>
<feature type="strand" evidence="34">
    <location>
        <begin position="1223"/>
        <end position="1230"/>
    </location>
</feature>
<feature type="helix" evidence="34">
    <location>
        <begin position="1232"/>
        <end position="1235"/>
    </location>
</feature>
<feature type="helix" evidence="34">
    <location>
        <begin position="1243"/>
        <end position="1245"/>
    </location>
</feature>
<feature type="strand" evidence="34">
    <location>
        <begin position="1247"/>
        <end position="1249"/>
    </location>
</feature>
<feature type="helix" evidence="34">
    <location>
        <begin position="1251"/>
        <end position="1258"/>
    </location>
</feature>
<feature type="helix" evidence="34">
    <location>
        <begin position="1260"/>
        <end position="1277"/>
    </location>
</feature>
<feature type="helix" evidence="34">
    <location>
        <begin position="1284"/>
        <end position="1295"/>
    </location>
</feature>
<feature type="strand" evidence="36">
    <location>
        <begin position="1296"/>
        <end position="1299"/>
    </location>
</feature>
<feature type="helix" evidence="34">
    <location>
        <begin position="1305"/>
        <end position="1311"/>
    </location>
</feature>
<feature type="helix" evidence="34">
    <location>
        <begin position="1315"/>
        <end position="1318"/>
    </location>
</feature>
<feature type="turn" evidence="34">
    <location>
        <begin position="1319"/>
        <end position="1321"/>
    </location>
</feature>
<feature type="helix" evidence="34">
    <location>
        <begin position="1324"/>
        <end position="1334"/>
    </location>
</feature>
<feature type="strand" evidence="34">
    <location>
        <begin position="1337"/>
        <end position="1339"/>
    </location>
</feature>
<feature type="helix" evidence="34">
    <location>
        <begin position="1343"/>
        <end position="1349"/>
    </location>
</feature>
<feature type="helix" evidence="34">
    <location>
        <begin position="1356"/>
        <end position="1358"/>
    </location>
</feature>
<feature type="strand" evidence="34">
    <location>
        <begin position="1359"/>
        <end position="1364"/>
    </location>
</feature>
<feature type="strand" evidence="34">
    <location>
        <begin position="1378"/>
        <end position="1380"/>
    </location>
</feature>
<feature type="helix" evidence="34">
    <location>
        <begin position="1382"/>
        <end position="1384"/>
    </location>
</feature>
<comment type="function">
    <text evidence="1 7 8 9 18 19 20 21 22 23 24">Catalytic core component of RNA polymerase III (Pol III), a DNA-dependent RNA polymerase which synthesizes small non-coding RNAs using the four ribonucleoside triphosphates as substrates. Synthesizes 5S rRNA, snRNAs, tRNAs and miRNAs from at least 500 distinct genomic loci (PubMed:19609254, PubMed:19631370, PubMed:20413673, PubMed:33335104, PubMed:33558764, PubMed:33558766, PubMed:34675218, PubMed:35637192, PubMed:9331371). Pol III-mediated transcription cycle proceeds through transcription initiation, transcription elongation and transcription termination stages. During transcription initiation, Pol III is recruited to DNA promoters type I, II or III with the help of general transcription factors and other specific initiation factors. Once the polymerase has escaped from the promoter it enters the elongation phase during which RNA is actively polymerized, based on complementarity with the template DNA strand. Transcription termination involves the release of the RNA transcript and polymerase from the DNA (PubMed:20413673, PubMed:33335104, PubMed:33558764, PubMed:33558766, PubMed:33674783, PubMed:34675218). Forms Pol III active center together with the second largest subunit POLR3B/RPC2. Appends one nucleotide at a time to the 3' end of the nascent RNA, with POLR3A/RPC1 contributing a Mg(2+)-coordinating DxDGD motif, and POLR3B/RPC2 participating in the coordination of a second Mg(2+) ion and providing lysine residues believed to facilitate Watson-Crick base pairing between the incoming nucleotide and template base. Typically, Mg(2+) ions direct a 5' nucleoside triphosphate to form a phosphodiester bond with the 3' hydroxyl of the preceding nucleotide of the nascent RNA, with the elimination of pyrophosphate (PubMed:19609254, PubMed:20413673, PubMed:33335104, PubMed:33558764, PubMed:33674783, PubMed:34675218, PubMed:9331371). Pol III plays a key role in sensing and limiting infection by intracellular bacteria and DNA viruses. Acts as a nuclear and cytosolic DNA sensor involved in innate immune response. Can sense non-self dsDNA that serves as template for transcription into dsRNA. The non-self RNA polymerase III transcripts, such as Epstein-Barr virus-encoded RNAs (EBERs) induce type I interferon and NF-kappa-B through the RIG-I pathway.</text>
</comment>
<comment type="catalytic activity">
    <reaction evidence="7 8 18 19 22 24">
        <text>RNA(n) + a ribonucleoside 5'-triphosphate = RNA(n+1) + diphosphate</text>
        <dbReference type="Rhea" id="RHEA:21248"/>
        <dbReference type="Rhea" id="RHEA-COMP:14527"/>
        <dbReference type="Rhea" id="RHEA-COMP:17342"/>
        <dbReference type="ChEBI" id="CHEBI:33019"/>
        <dbReference type="ChEBI" id="CHEBI:61557"/>
        <dbReference type="ChEBI" id="CHEBI:140395"/>
        <dbReference type="EC" id="2.7.7.6"/>
    </reaction>
    <physiologicalReaction direction="left-to-right" evidence="7 8 18 19 22 24">
        <dbReference type="Rhea" id="RHEA:21249"/>
    </physiologicalReaction>
</comment>
<comment type="cofactor">
    <cofactor evidence="19 22">
        <name>Mg(2+)</name>
        <dbReference type="ChEBI" id="CHEBI:18420"/>
    </cofactor>
    <text evidence="4 19 22">Two Mg(2+) ions are coordinated by both the catalytic residues and the nucleic acid substrate to enhance substrate recognition and catalytic efficiency.</text>
</comment>
<comment type="subunit">
    <text evidence="1 5 6 8 18 19 20 21 22 23">Component of the RNA polymerase III (Pol III) (Pol III) complex consisting of 17 subunits: a ten-subunit catalytic core composed of POLR3A/RPC1, POLR3B/RPC2, POLR1C/RPAC1, POLR1D/RPAC2, POLR3K/RPC10, POLR2E/RPABC1, POLR2F/RPABC2, POLR2H/RPABC3, POLR2K/RPABC4 and POLR2L/RPABC5; a mobile stalk composed of two subunits POLR3H/RPC8 and CRCP/RPC9, protruding from the core and functioning primarily in transcription initiation; and additional subunits homologous to general transcription factors of the RNA polymerase II machinery, POLR3C/RPC3-POLR3F/RPC6-POLR3G/RPC7 heterotrimer required for transcription initiation and POLR3D/RPC4-POLR3E/RPC5 heterodimer involved in both transcription initiation and termination (PubMed:12391170, PubMed:19631370, PubMed:33335104, PubMed:33674783, PubMed:34675218). Pol III exists as two alternative complexes defined by the mutually exclusive incorporation of subunit POLR3G/RPC7alpha or POLR3GL/RPC7beta. The presence of POLR3G/RPC7alpha or POLR3GL/RPC7beta differentially modulates the transcription potential of Pol III, with POLR3G/RPC7alpha specifically associated with transcription of snaR-A non-coding RNAs (PubMed:33558764, PubMed:33558766, PubMed:35637192). As part of the RNA polymerase III complex, interacts with PKP2 (PubMed:11416169).</text>
</comment>
<comment type="interaction">
    <interactant intactId="EBI-2515113">
        <id>O14802</id>
    </interactant>
    <interactant intactId="EBI-359873">
        <id>Q9UHV9</id>
        <label>PFDN2</label>
    </interactant>
    <organismsDiffer>false</organismsDiffer>
    <experiments>2</experiments>
</comment>
<comment type="interaction">
    <interactant intactId="EBI-2515113">
        <id>O14802</id>
    </interactant>
    <interactant intactId="EBI-1049387">
        <id>Q15185</id>
        <label>PTGES3</label>
    </interactant>
    <organismsDiffer>false</organismsDiffer>
    <experiments>3</experiments>
</comment>
<comment type="interaction">
    <interactant intactId="EBI-2515113">
        <id>O14802</id>
    </interactant>
    <interactant intactId="EBI-356928">
        <id>Q9H6T3</id>
        <label>RPAP3</label>
    </interactant>
    <organismsDiffer>false</organismsDiffer>
    <experiments>3</experiments>
</comment>
<comment type="subcellular location">
    <subcellularLocation>
        <location evidence="5 18">Nucleus</location>
    </subcellularLocation>
    <subcellularLocation>
        <location evidence="18">Cytoplasm</location>
        <location evidence="18">Cytosol</location>
    </subcellularLocation>
</comment>
<comment type="tissue specificity">
    <text evidence="10">Expressed in the brain, in the cortex and the white matter (at protein level).</text>
</comment>
<comment type="disease" evidence="10 11 12 13">
    <disease id="DI-03248">
        <name>Leukodystrophy, hypomyelinating, 7, with or without oligodontia and/or hypogonadotropic hypogonadism</name>
        <acronym>HLD7</acronym>
        <description>An autosomal recessive neurodegenerative disorder characterized by childhood onset of progressive motor decline manifest as spasticity, ataxia, tremor, and cerebellar signs, as well as mild cognitive regression. Other features may include hypodontia or oligodontia and hypogonadotropic hypogonadism. There is considerable inter- and intrafamilial variability.</description>
        <dbReference type="MIM" id="607694"/>
    </disease>
    <text>The disease is caused by variants affecting the gene represented in this entry.</text>
</comment>
<comment type="disease" evidence="14 15 16 17">
    <disease id="DI-05494">
        <name>Wiedemann-Rautenstrauch syndrome</name>
        <acronym>WDRTS</acronym>
        <description>An autosomal recessive, neonatal progeroid disorder characterized by intrauterine growth retardation, failure to thrive, short stature, hypotonia, variable mental impairment, and a progeroid appearance. Clinical features include apparent macrocephaly, sparse hair, prominent scalp veins, entropion, greatly widened anterior fontanelles, malar hypoplasia, and generalized lipoatrophy. Death usually occurs in early childhood but survival to third decade has been reported.</description>
        <dbReference type="MIM" id="264090"/>
    </disease>
    <text>The disease is caused by variants affecting the gene represented in this entry.</text>
</comment>
<comment type="similarity">
    <text evidence="26">Belongs to the RNA polymerase beta' chain family.</text>
</comment>
<gene>
    <name evidence="27" type="primary">POLR3A</name>
</gene>